<comment type="function">
    <text evidence="2">The replicase polyprotein of coronaviruses is a multifunctional protein: it contains the activities necessary for the transcription of negative stranded RNA, leader RNA, subgenomic mRNAs and progeny virion RNA as well as proteinases responsible for the cleavage of the polyprotein into functional products.</text>
</comment>
<comment type="function">
    <molecule>Host translation inhibitor nsp1</molecule>
    <text evidence="2 36">Inhibits host translation by interacting with the 40S ribosomal subunit. The nsp1-40S ribosome complex further induces an endonucleolytic cleavage near the 5'UTR of host mRNAs, targeting them for degradation. This inhibits the integrated stress response (ISR) in the infected cell by preventing EIF2S1/eIF2-alpha phosphorylation upstream of stress granule formation and depletes host G3BP1 (PubMed:36534661). Viral mRNAs are not susceptible to nsp1-mediated endonucleolytic RNA cleavage thanks to the presence of a 5'-end leader sequence and are therefore protected from degradation. By suppressing host gene expression, nsp1 facilitates efficient viral gene expression in infected cells and evasion from host immune response.</text>
</comment>
<comment type="function">
    <molecule>Non-structural protein 2</molecule>
    <text evidence="2">May play a role in the modulation of host cell survival signaling pathway by interacting with host PHB and PHB2. Indeed, these two proteins play a role in maintaining the functional integrity of the mitochondria and protecting cells from various stresses.</text>
</comment>
<comment type="function">
    <molecule>Papain-like proteinase nsp3</molecule>
    <text evidence="2">Responsible for the cleavages located at the N-terminus of the replicase polyprotein. In addition, PL-PRO possesses a deubiquitinating/deISGylating activity and processes both 'Lys-48'- and 'Lys-63'-linked polyubiquitin chains from cellular substrates. Participates together with nsp4 in the assembly of virally-induced cytoplasmic double-membrane vesicles necessary for viral replication. Antagonizes innate immune induction of type I interferon by blocking the phosphorylation, dimerization and subsequent nuclear translocation of host IRF3. Also prevents host NF-kappa-B signaling.</text>
</comment>
<comment type="function">
    <molecule>Non-structural protein 4</molecule>
    <text evidence="2">Participates in the assembly of virally-induced cytoplasmic double-membrane vesicles necessary for viral replication.</text>
</comment>
<comment type="function">
    <molecule>3C-like proteinase nsp5</molecule>
    <text evidence="2 9">Cleaves the C-terminus of replicase polyprotein at 11 sites. Recognizes substrates containing the core sequence [ILMVF]-Q-|-[SGACN]. Also able to bind an ADP-ribose-1''-phosphate (ADRP).</text>
</comment>
<comment type="function">
    <molecule>Non-structural protein 6</molecule>
    <text evidence="2">Plays a role in the initial induction of autophagosomes from host endoplasmic reticulum. Later, limits the expansion of these phagosomes that are no longer able to deliver viral components to lysosomes.</text>
</comment>
<comment type="function">
    <molecule>Non-structural protein 7</molecule>
    <text evidence="2">Forms a hexadecamer with nsp8 (8 subunits of each) that may participate in viral replication by acting as a primase. Alternatively, may synthesize substantially longer products than oligonucleotide primers.</text>
</comment>
<comment type="function">
    <molecule>Non-structural protein 8</molecule>
    <text evidence="2">Forms a hexadecamer with nsp7 (8 subunits of each) that may participate in viral replication by acting as a primase. Alternatively, may synthesize substantially longer products than oligonucleotide primers.</text>
</comment>
<comment type="function">
    <molecule>Viral protein genome-linked nsp9</molecule>
    <text evidence="3">Forms a primer, NSP9-pU, which is utilized by the polymerase for the initiation of RNA chains. Interacts with ribosome signal recognition particle RNA (SRP). Together with NSP8, suppress protein integration into the cell membrane, thereby disrupting host immune defenses.</text>
</comment>
<comment type="function">
    <molecule>Non-structural protein 10</molecule>
    <text evidence="2">Plays a pivotal role in viral transcription by stimulating both nsp14 3'-5' exoribonuclease and nsp16 2'-O-methyltransferase activities. Therefore plays an essential role in viral mRNAs cap methylation.</text>
</comment>
<comment type="function">
    <molecule>RNA-directed RNA polymerase nsp12</molecule>
    <text evidence="3">RNA-directed RNA polymerase that catalyzes the transcription of viral genomic and subgenomic RNAs. Acts in complex with nsp7 and nsp8 to transcribe both the minus and positive strands of genomic RNA. The kinase-like NiRAN domain of NSP12 attaches one or more nucleotides to the amino terminus of NSP9, forming a covalent RNA-protein intermediate that serves as transcription/replication primer. Subgenomic RNAs (sgRNAs) are formed by discontinuous transcription: The polymerase has the ability to pause at transcription-regulating sequences (TRS) and jump to the leader TRS, resulting in a major deletion. This creates a series of subgenomic RNAs that are replicated, transcribed and translated. In addition, Nsp12 is a subunit of the viral RNA capping enzyme that catalyzes the RNA guanylyltransferase reaction for genomic and sub-genomic RNAs. Subsequently, the NiRAN domain transfers RNA to GDP, and forms the core cap structure GpppA-RNA.</text>
</comment>
<comment type="function">
    <molecule>Helicase nsp13</molecule>
    <text evidence="2">Multi-functional protein with a zinc-binding domain in N-terminus displaying RNA and DNA duplex-unwinding activities with 5' to 3' polarity. Activity of helicase is dependent on magnesium.</text>
</comment>
<comment type="function">
    <molecule>Guanine-N7 methyltransferase nsp14</molecule>
    <text evidence="2">Plays a role in viral RNA synthesis through two distinct activities. The N7-guanine methyltransferase activity plays a role in the formation of the cap structure GpppA-RNA. The proofreading exoribonuclease reduces the sensitivity of the virus to RNA mutagens during replication. This activity acts on both ssRNA and dsRNA in a 3'-5' direction.</text>
</comment>
<comment type="function">
    <molecule>Uridylate-specific endoribonuclease nsp15</molecule>
    <text evidence="2">Plays a role in viral transcription/replication and prevents the simultaneous activation of host cell dsRNA sensors, such as MDA5/IFIH1, OAS, and PKR (By similarity). Acts by degrading the 5'-polyuridines generated during replication of the poly(A) region of viral genomic and subgenomic RNAs. Catalyzes a two-step reaction in which a 2'3'-cyclic phosphate (2'3'-cP) is first generated by 2'-O transesterification, which is then hydrolyzed to a 3'-phosphate (3'-P) (By similarity). If not degraded, poly(U) RNA would hybridize with poly(A) RNA tails and activate host dsRNA sensors (By similarity).</text>
</comment>
<comment type="function">
    <molecule>2'-O-methyltransferase nsp16</molecule>
    <text evidence="2">Methyltransferase that mediates mRNA cap 2'-O-ribose methylation to the 5'-cap structure of viral mRNAs. N7-methyl guanosine cap is a prerequisite for binding of nsp16. Therefore plays an essential role in viral mRNAs cap methylation which is essential to evade immune system.</text>
</comment>
<comment type="catalytic activity">
    <molecule>RNA-directed RNA polymerase nsp12</molecule>
    <reaction evidence="8">
        <text>RNA(n) + a ribonucleoside 5'-triphosphate = RNA(n+1) + diphosphate</text>
        <dbReference type="Rhea" id="RHEA:21248"/>
        <dbReference type="Rhea" id="RHEA-COMP:14527"/>
        <dbReference type="Rhea" id="RHEA-COMP:17342"/>
        <dbReference type="ChEBI" id="CHEBI:33019"/>
        <dbReference type="ChEBI" id="CHEBI:61557"/>
        <dbReference type="ChEBI" id="CHEBI:140395"/>
        <dbReference type="EC" id="2.7.7.48"/>
    </reaction>
</comment>
<comment type="catalytic activity">
    <molecule>Helicase nsp13</molecule>
    <reaction>
        <text>ATP + H2O = ADP + phosphate + H(+)</text>
        <dbReference type="Rhea" id="RHEA:13065"/>
        <dbReference type="ChEBI" id="CHEBI:15377"/>
        <dbReference type="ChEBI" id="CHEBI:15378"/>
        <dbReference type="ChEBI" id="CHEBI:30616"/>
        <dbReference type="ChEBI" id="CHEBI:43474"/>
        <dbReference type="ChEBI" id="CHEBI:456216"/>
        <dbReference type="EC" id="3.6.4.12"/>
    </reaction>
</comment>
<comment type="catalytic activity">
    <molecule>Helicase nsp13</molecule>
    <reaction>
        <text>ATP + H2O = ADP + phosphate + H(+)</text>
        <dbReference type="Rhea" id="RHEA:13065"/>
        <dbReference type="ChEBI" id="CHEBI:15377"/>
        <dbReference type="ChEBI" id="CHEBI:15378"/>
        <dbReference type="ChEBI" id="CHEBI:30616"/>
        <dbReference type="ChEBI" id="CHEBI:43474"/>
        <dbReference type="ChEBI" id="CHEBI:456216"/>
        <dbReference type="EC" id="3.6.4.13"/>
    </reaction>
</comment>
<comment type="catalytic activity">
    <molecule>Papain-like proteinase nsp3</molecule>
    <reaction>
        <text>Thiol-dependent hydrolysis of ester, thioester, amide, peptide and isopeptide bonds formed by the C-terminal Gly of ubiquitin (a 76-residue protein attached to proteins as an intracellular targeting signal).</text>
        <dbReference type="EC" id="3.4.19.12"/>
    </reaction>
</comment>
<comment type="catalytic activity">
    <molecule>2'-O-methyltransferase nsp16</molecule>
    <reaction evidence="2">
        <text>a 5'-end (N(7)-methyl 5'-triphosphoguanosine)-ribonucleoside in mRNA + S-adenosyl-L-methionine = a 5'-end (N(7)-methyl 5'-triphosphoguanosine)-(2'-O-methyl-ribonucleoside) in mRNA + S-adenosyl-L-homocysteine + H(+)</text>
        <dbReference type="Rhea" id="RHEA:67020"/>
        <dbReference type="Rhea" id="RHEA-COMP:17167"/>
        <dbReference type="Rhea" id="RHEA-COMP:17168"/>
        <dbReference type="ChEBI" id="CHEBI:15378"/>
        <dbReference type="ChEBI" id="CHEBI:57856"/>
        <dbReference type="ChEBI" id="CHEBI:59789"/>
        <dbReference type="ChEBI" id="CHEBI:156461"/>
        <dbReference type="ChEBI" id="CHEBI:167609"/>
        <dbReference type="EC" id="2.1.1.57"/>
    </reaction>
</comment>
<comment type="catalytic activity">
    <molecule>Uridylate-specific endoribonuclease nsp15</molecule>
    <reaction evidence="2">
        <text>uridylyl-uridylyl-ribonucleotide-RNA = a 3'-end uridylyl-2',3'-cyclophospho-uridine-RNA + a 5'-end dephospho-ribonucleoside-RNA</text>
        <dbReference type="Rhea" id="RHEA:67732"/>
        <dbReference type="Rhea" id="RHEA-COMP:13936"/>
        <dbReference type="Rhea" id="RHEA-COMP:17334"/>
        <dbReference type="Rhea" id="RHEA-COMP:17335"/>
        <dbReference type="ChEBI" id="CHEBI:138284"/>
        <dbReference type="ChEBI" id="CHEBI:173079"/>
        <dbReference type="ChEBI" id="CHEBI:173080"/>
    </reaction>
</comment>
<comment type="catalytic activity">
    <molecule>RNA-directed RNA polymerase nsp12</molecule>
    <reaction evidence="3">
        <text>a 5'-end diphospho-ribonucleoside in mRNA + GTP + H(+) = a 5'-end (5'-triphosphoguanosine)-ribonucleoside in mRNA + diphosphate</text>
        <dbReference type="Rhea" id="RHEA:67012"/>
        <dbReference type="Rhea" id="RHEA-COMP:17165"/>
        <dbReference type="Rhea" id="RHEA-COMP:17166"/>
        <dbReference type="ChEBI" id="CHEBI:15378"/>
        <dbReference type="ChEBI" id="CHEBI:33019"/>
        <dbReference type="ChEBI" id="CHEBI:37565"/>
        <dbReference type="ChEBI" id="CHEBI:167616"/>
        <dbReference type="ChEBI" id="CHEBI:167617"/>
        <dbReference type="EC" id="2.7.7.50"/>
    </reaction>
    <physiologicalReaction direction="left-to-right" evidence="3">
        <dbReference type="Rhea" id="RHEA:67013"/>
    </physiologicalReaction>
</comment>
<comment type="catalytic activity">
    <molecule>Guanine-N7 methyltransferase nsp14</molecule>
    <reaction evidence="2">
        <text>a 5'-end (5'-triphosphoguanosine)-ribonucleoside in mRNA + S-adenosyl-L-methionine = a 5'-end (N(7)-methyl 5'-triphosphoguanosine)-ribonucleoside in mRNA + S-adenosyl-L-homocysteine</text>
        <dbReference type="Rhea" id="RHEA:67008"/>
        <dbReference type="Rhea" id="RHEA-COMP:17166"/>
        <dbReference type="Rhea" id="RHEA-COMP:17167"/>
        <dbReference type="ChEBI" id="CHEBI:57856"/>
        <dbReference type="ChEBI" id="CHEBI:59789"/>
        <dbReference type="ChEBI" id="CHEBI:156461"/>
        <dbReference type="ChEBI" id="CHEBI:167617"/>
        <dbReference type="EC" id="2.1.1.56"/>
    </reaction>
    <physiologicalReaction direction="left-to-right" evidence="2">
        <dbReference type="Rhea" id="RHEA:67009"/>
    </physiologicalReaction>
</comment>
<comment type="cofactor">
    <molecule>Uridylate-specific endoribonuclease nsp15</molecule>
    <cofactor evidence="2">
        <name>Mn(2+)</name>
        <dbReference type="ChEBI" id="CHEBI:29035"/>
    </cofactor>
    <text evidence="2">Likely affects Nsp15 binding to RNA.</text>
</comment>
<comment type="cofactor">
    <molecule>RNA-directed RNA polymerase nsp12</molecule>
    <cofactor evidence="3">
        <name>Mg(2+)</name>
        <dbReference type="ChEBI" id="CHEBI:18420"/>
    </cofactor>
</comment>
<comment type="subunit">
    <molecule>Non-structural protein 2</molecule>
    <text evidence="2">Interacts with host PHB and PHB2.</text>
</comment>
<comment type="subunit">
    <molecule>Non-structural protein 4</molecule>
    <text evidence="2">Interacts with papain-like protease nsp3 and non-structural protein 6.</text>
</comment>
<comment type="subunit">
    <molecule>3C-like proteinase nsp5</molecule>
    <text evidence="2">Monomer. Homodimer. Only the homodimer shows catalytic activity.</text>
</comment>
<comment type="subunit">
    <molecule>Non-structural protein 7</molecule>
    <text evidence="3">Interacts with nsp8 and nsp12 to form the replication-transcription complex (RTC): nsp12, nsp7, two subunits of nsp8, and up to two subunits of nsp13.</text>
</comment>
<comment type="subunit">
    <molecule>Non-structural protein 8</molecule>
    <text evidence="3">Interacts with nsp7, nsp13 and nsp12 to form the replication-transcription complex (RTC): nsp12, nsp7, two subunits of nsp8, and up to two subunits of nsp13.</text>
</comment>
<comment type="subunit">
    <molecule>Viral protein genome-linked nsp9</molecule>
    <text evidence="3">Interacts with nsp12.</text>
</comment>
<comment type="subunit">
    <molecule>Non-structural protein 10</molecule>
    <text evidence="3">Interacts with proofreading exoribonuclease nsp14 and 2'-O-methyltransferase nsp16; these interactions enhance nsp14 and nsp16 enzymatic activities.</text>
</comment>
<comment type="subunit">
    <molecule>RNA-directed RNA polymerase nsp12</molecule>
    <text evidence="3">Interacts with nsp7 and nsp8 to form the replication-transcription complex (RTC): nsp12, nsp7, two subunits of nsp8, and up to two subunits of nsp13. Interacts with nsp9.</text>
</comment>
<comment type="subunit">
    <molecule>Helicase nsp13</molecule>
    <text evidence="3">Interacts with nsp8 to form the replication-transcription complex (RTC): nsp12, nsp7, two subunits of nsp8, and up to two subunits of nsp13.</text>
</comment>
<comment type="subcellular location">
    <molecule>Papain-like proteinase nsp3</molecule>
    <subcellularLocation>
        <location evidence="37">Host membrane</location>
        <topology evidence="37">Multi-pass membrane protein</topology>
    </subcellularLocation>
</comment>
<comment type="subcellular location">
    <molecule>Non-structural protein 4</molecule>
    <subcellularLocation>
        <location evidence="37">Host membrane</location>
        <topology evidence="37">Multi-pass membrane protein</topology>
    </subcellularLocation>
</comment>
<comment type="subcellular location">
    <molecule>Non-structural protein 6</molecule>
    <subcellularLocation>
        <location evidence="37">Host membrane</location>
        <topology evidence="37">Multi-pass membrane protein</topology>
    </subcellularLocation>
</comment>
<comment type="subcellular location">
    <molecule>Non-structural protein 7</molecule>
    <subcellularLocation>
        <location evidence="1">Host cytoplasm</location>
        <location evidence="1">Host perinuclear region</location>
    </subcellularLocation>
    <text evidence="1">nsp7, nsp8, nsp9 and nsp10 are localized in cytoplasmic foci, largely perinuclear. Late in infection, they merge into confluent complexes (By similarity).</text>
</comment>
<comment type="subcellular location">
    <molecule>Non-structural protein 8</molecule>
    <subcellularLocation>
        <location evidence="1">Host cytoplasm</location>
        <location evidence="1">Host perinuclear region</location>
    </subcellularLocation>
    <text evidence="1">nsp7, nsp8, nsp9 and nsp10 are localized in cytoplasmic foci, largely perinuclear. Late in infection, they merge into confluent complexes (By similarity).</text>
</comment>
<comment type="subcellular location">
    <molecule>Viral protein genome-linked nsp9</molecule>
    <subcellularLocation>
        <location evidence="1">Host cytoplasm</location>
        <location evidence="1">Host perinuclear region</location>
    </subcellularLocation>
    <text evidence="1">nsp7, nsp8, nsp9 and nsp10 are localized in cytoplasmic foci, largely perinuclear. Late in infection, they merge into confluent complexes (By similarity).</text>
</comment>
<comment type="subcellular location">
    <molecule>Non-structural protein 10</molecule>
    <subcellularLocation>
        <location evidence="1">Host cytoplasm</location>
        <location evidence="1">Host perinuclear region</location>
    </subcellularLocation>
    <text evidence="1">nsp7, nsp8, nsp9 and nsp10 are localized in cytoplasmic foci, largely perinuclear. Late in infection, they merge into confluent complexes (By similarity).</text>
</comment>
<comment type="subcellular location">
    <molecule>Helicase nsp13</molecule>
    <subcellularLocation>
        <location evidence="37">Host endoplasmic reticulum-Golgi intermediate compartment</location>
    </subcellularLocation>
    <text evidence="1">The helicase interacts with the N protein in membranous complexes and colocalizes with sites of synthesis of new viral RNA.</text>
</comment>
<comment type="subcellular location">
    <molecule>Uridylate-specific endoribonuclease nsp15</molecule>
    <subcellularLocation>
        <location evidence="1">Host cytoplasm</location>
        <location evidence="1">Host perinuclear region</location>
    </subcellularLocation>
</comment>
<comment type="alternative products">
    <event type="ribosomal frameshifting"/>
    <isoform>
        <id>P0C6X6-1</id>
        <name>Replicase polyprotein 1ab</name>
        <name>pp1ab</name>
        <sequence type="displayed"/>
    </isoform>
    <isoform>
        <id>P0C6U7-1</id>
        <name>Replicase polyprotein 1a</name>
        <name>pp1a</name>
        <name>ORF1a polyprotein</name>
        <sequence type="external"/>
    </isoform>
</comment>
<comment type="domain">
    <text>The hydrophobic domains (HD) could mediate the membrane association of the replication complex and thereby alter the architecture of the host cell membrane.</text>
</comment>
<comment type="PTM">
    <text evidence="1">Specific enzymatic cleavages in vivo by its own proteases yield mature proteins. 3CL-PRO and PL-PRO proteinases are autocatalytically processed (By similarity).</text>
</comment>
<comment type="miscellaneous">
    <text>The sequence shown is that of isolate 19572 Belgium 2004.</text>
</comment>
<comment type="miscellaneous">
    <molecule>Isoform Replicase polyprotein 1ab</molecule>
    <text>Produced by -1 ribosomal frameshifting at the 1a-1b genes boundary.</text>
</comment>
<comment type="similarity">
    <text evidence="37">Belongs to the coronaviruses polyprotein 1ab family.</text>
</comment>
<protein>
    <recommendedName>
        <fullName>Replicase polyprotein 1ab</fullName>
        <shortName>pp1ab</shortName>
    </recommendedName>
    <alternativeName>
        <fullName>ORF1ab polyprotein</fullName>
    </alternativeName>
    <component>
        <recommendedName>
            <fullName>Host translation inhibitor nsp1</fullName>
            <shortName>nsp1</shortName>
        </recommendedName>
        <alternativeName>
            <fullName>p28</fullName>
        </alternativeName>
    </component>
    <component>
        <recommendedName>
            <fullName>Non-structural protein 2</fullName>
            <shortName>nsp2</shortName>
        </recommendedName>
        <alternativeName>
            <fullName>p65</fullName>
        </alternativeName>
    </component>
    <component>
        <recommendedName>
            <fullName>Papain-like proteinase nsp3</fullName>
            <shortName>PL-PRO</shortName>
            <ecNumber>3.4.19.12</ecNumber>
            <ecNumber>3.4.22.-</ecNumber>
        </recommendedName>
        <alternativeName>
            <fullName>Non-structural protein 3</fullName>
            <shortName>nsp3</shortName>
        </alternativeName>
        <alternativeName>
            <fullName>p210</fullName>
        </alternativeName>
    </component>
    <component>
        <recommendedName>
            <fullName>Non-structural protein 4</fullName>
            <shortName>nsp4</shortName>
        </recommendedName>
        <alternativeName>
            <fullName>Peptide HD2</fullName>
        </alternativeName>
        <alternativeName>
            <fullName>p44</fullName>
        </alternativeName>
    </component>
    <component>
        <recommendedName>
            <fullName>3C-like proteinase nsp5</fullName>
            <shortName>3CL-PRO</shortName>
            <shortName>3CLp</shortName>
            <ecNumber>3.4.22.-</ecNumber>
        </recommendedName>
        <alternativeName>
            <fullName>M-PRO</fullName>
        </alternativeName>
        <alternativeName>
            <fullName>nsp5</fullName>
        </alternativeName>
        <alternativeName>
            <fullName>p27</fullName>
        </alternativeName>
    </component>
    <component>
        <recommendedName>
            <fullName>Non-structural protein 6</fullName>
            <shortName>nsp6</shortName>
        </recommendedName>
    </component>
    <component>
        <recommendedName>
            <fullName>Non-structural protein 7</fullName>
            <shortName>nsp7</shortName>
        </recommendedName>
        <alternativeName>
            <fullName>p10</fullName>
        </alternativeName>
    </component>
    <component>
        <recommendedName>
            <fullName>Non-structural protein 8</fullName>
            <shortName>nsp8</shortName>
        </recommendedName>
        <alternativeName>
            <fullName>p22</fullName>
        </alternativeName>
    </component>
    <component>
        <recommendedName>
            <fullName>Viral protein genome-linked nsp9</fullName>
        </recommendedName>
        <alternativeName>
            <fullName>Non-structural protein 9</fullName>
            <shortName>nsp9</shortName>
        </alternativeName>
        <alternativeName>
            <fullName>RNA-capping enzyme subunit nsp9</fullName>
        </alternativeName>
        <alternativeName>
            <fullName>p12</fullName>
        </alternativeName>
    </component>
    <component>
        <recommendedName>
            <fullName>Non-structural protein 10</fullName>
            <shortName>nsp10</shortName>
        </recommendedName>
        <alternativeName>
            <fullName>Growth factor-like peptide</fullName>
            <shortName>GFL</shortName>
        </alternativeName>
        <alternativeName>
            <fullName>p15</fullName>
        </alternativeName>
    </component>
    <component>
        <recommendedName>
            <fullName>RNA-directed RNA polymerase nsp12</fullName>
            <shortName>Pol</shortName>
            <shortName>RdRp</shortName>
            <ecNumber>2.7.7.48</ecNumber>
            <ecNumber>2.7.7.50</ecNumber>
        </recommendedName>
        <alternativeName>
            <fullName>nsp12</fullName>
        </alternativeName>
        <alternativeName>
            <fullName>p100</fullName>
        </alternativeName>
    </component>
    <component>
        <recommendedName>
            <fullName>Helicase nsp13</fullName>
            <shortName>Hel</shortName>
            <ecNumber>3.6.4.12</ecNumber>
            <ecNumber>3.6.4.13</ecNumber>
        </recommendedName>
        <alternativeName>
            <fullName>nsp13</fullName>
        </alternativeName>
        <alternativeName>
            <fullName>p67</fullName>
        </alternativeName>
    </component>
    <component>
        <recommendedName>
            <fullName>Guanine-N7 methyltransferase nsp14</fullName>
            <shortName>ExoN</shortName>
            <ecNumber>2.1.1.56</ecNumber>
            <ecNumber>3.1.13.-</ecNumber>
        </recommendedName>
        <alternativeName>
            <fullName>nsp14</fullName>
        </alternativeName>
    </component>
    <component>
        <recommendedName>
            <fullName>Uridylate-specific endoribonuclease nsp15</fullName>
            <ecNumber>4.6.1.-</ecNumber>
        </recommendedName>
        <alternativeName>
            <fullName>NendoU</fullName>
        </alternativeName>
        <alternativeName>
            <fullName>nsp15</fullName>
        </alternativeName>
        <alternativeName>
            <fullName>p35</fullName>
        </alternativeName>
    </component>
    <component>
        <recommendedName>
            <fullName>2'-O-methyltransferase nsp16</fullName>
            <ecNumber>2.1.1.57</ecNumber>
        </recommendedName>
        <alternativeName>
            <fullName>nsp16</fullName>
        </alternativeName>
    </component>
</protein>
<accession>P0C6X6</accession>
<accession>Q4VID8</accession>
<accession>Q4VIE7</accession>
<accession>Q696Q1</accession>
<accession>Q6TNG2</accession>
<accession>Q9WAC3</accession>
<gene>
    <name type="primary">rep</name>
    <name type="ORF">1a-1b</name>
</gene>
<organism>
    <name type="scientific">Human coronavirus OC43</name>
    <name type="common">HCoV-OC43</name>
    <dbReference type="NCBI Taxonomy" id="31631"/>
    <lineage>
        <taxon>Viruses</taxon>
        <taxon>Riboviria</taxon>
        <taxon>Orthornavirae</taxon>
        <taxon>Pisuviricota</taxon>
        <taxon>Pisoniviricetes</taxon>
        <taxon>Nidovirales</taxon>
        <taxon>Cornidovirineae</taxon>
        <taxon>Coronaviridae</taxon>
        <taxon>Orthocoronavirinae</taxon>
        <taxon>Betacoronavirus</taxon>
        <taxon>Embecovirus</taxon>
        <taxon>Betacoronavirus 1</taxon>
    </lineage>
</organism>
<evidence type="ECO:0000250" key="1"/>
<evidence type="ECO:0000250" key="2">
    <source>
        <dbReference type="UniProtKB" id="P0C6X7"/>
    </source>
</evidence>
<evidence type="ECO:0000250" key="3">
    <source>
        <dbReference type="UniProtKB" id="P0DTD1"/>
    </source>
</evidence>
<evidence type="ECO:0000255" key="4"/>
<evidence type="ECO:0000255" key="5">
    <source>
        <dbReference type="PROSITE-ProRule" id="PRU00214"/>
    </source>
</evidence>
<evidence type="ECO:0000255" key="6">
    <source>
        <dbReference type="PROSITE-ProRule" id="PRU00444"/>
    </source>
</evidence>
<evidence type="ECO:0000255" key="7">
    <source>
        <dbReference type="PROSITE-ProRule" id="PRU00490"/>
    </source>
</evidence>
<evidence type="ECO:0000255" key="8">
    <source>
        <dbReference type="PROSITE-ProRule" id="PRU00539"/>
    </source>
</evidence>
<evidence type="ECO:0000255" key="9">
    <source>
        <dbReference type="PROSITE-ProRule" id="PRU00772"/>
    </source>
</evidence>
<evidence type="ECO:0000255" key="10">
    <source>
        <dbReference type="PROSITE-ProRule" id="PRU00986"/>
    </source>
</evidence>
<evidence type="ECO:0000255" key="11">
    <source>
        <dbReference type="PROSITE-ProRule" id="PRU01289"/>
    </source>
</evidence>
<evidence type="ECO:0000255" key="12">
    <source>
        <dbReference type="PROSITE-ProRule" id="PRU01290"/>
    </source>
</evidence>
<evidence type="ECO:0000255" key="13">
    <source>
        <dbReference type="PROSITE-ProRule" id="PRU01291"/>
    </source>
</evidence>
<evidence type="ECO:0000255" key="14">
    <source>
        <dbReference type="PROSITE-ProRule" id="PRU01292"/>
    </source>
</evidence>
<evidence type="ECO:0000255" key="15">
    <source>
        <dbReference type="PROSITE-ProRule" id="PRU01293"/>
    </source>
</evidence>
<evidence type="ECO:0000255" key="16">
    <source>
        <dbReference type="PROSITE-ProRule" id="PRU01294"/>
    </source>
</evidence>
<evidence type="ECO:0000255" key="17">
    <source>
        <dbReference type="PROSITE-ProRule" id="PRU01295"/>
    </source>
</evidence>
<evidence type="ECO:0000255" key="18">
    <source>
        <dbReference type="PROSITE-ProRule" id="PRU01296"/>
    </source>
</evidence>
<evidence type="ECO:0000255" key="19">
    <source>
        <dbReference type="PROSITE-ProRule" id="PRU01297"/>
    </source>
</evidence>
<evidence type="ECO:0000255" key="20">
    <source>
        <dbReference type="PROSITE-ProRule" id="PRU01298"/>
    </source>
</evidence>
<evidence type="ECO:0000255" key="21">
    <source>
        <dbReference type="PROSITE-ProRule" id="PRU01299"/>
    </source>
</evidence>
<evidence type="ECO:0000255" key="22">
    <source>
        <dbReference type="PROSITE-ProRule" id="PRU01300"/>
    </source>
</evidence>
<evidence type="ECO:0000255" key="23">
    <source>
        <dbReference type="PROSITE-ProRule" id="PRU01303"/>
    </source>
</evidence>
<evidence type="ECO:0000255" key="24">
    <source>
        <dbReference type="PROSITE-ProRule" id="PRU01305"/>
    </source>
</evidence>
<evidence type="ECO:0000255" key="25">
    <source>
        <dbReference type="PROSITE-ProRule" id="PRU01306"/>
    </source>
</evidence>
<evidence type="ECO:0000255" key="26">
    <source>
        <dbReference type="PROSITE-ProRule" id="PRU01307"/>
    </source>
</evidence>
<evidence type="ECO:0000255" key="27">
    <source>
        <dbReference type="PROSITE-ProRule" id="PRU01308"/>
    </source>
</evidence>
<evidence type="ECO:0000255" key="28">
    <source>
        <dbReference type="PROSITE-ProRule" id="PRU01333"/>
    </source>
</evidence>
<evidence type="ECO:0000255" key="29">
    <source>
        <dbReference type="PROSITE-ProRule" id="PRU01334"/>
    </source>
</evidence>
<evidence type="ECO:0000255" key="30">
    <source>
        <dbReference type="PROSITE-ProRule" id="PRU01335"/>
    </source>
</evidence>
<evidence type="ECO:0000255" key="31">
    <source>
        <dbReference type="PROSITE-ProRule" id="PRU01336"/>
    </source>
</evidence>
<evidence type="ECO:0000255" key="32">
    <source>
        <dbReference type="PROSITE-ProRule" id="PRU01337"/>
    </source>
</evidence>
<evidence type="ECO:0000255" key="33">
    <source>
        <dbReference type="PROSITE-ProRule" id="PRU01338"/>
    </source>
</evidence>
<evidence type="ECO:0000255" key="34">
    <source>
        <dbReference type="PROSITE-ProRule" id="PRU01344"/>
    </source>
</evidence>
<evidence type="ECO:0000256" key="35">
    <source>
        <dbReference type="SAM" id="MobiDB-lite"/>
    </source>
</evidence>
<evidence type="ECO:0000269" key="36">
    <source>
    </source>
</evidence>
<evidence type="ECO:0000305" key="37"/>
<evidence type="ECO:0007829" key="38">
    <source>
        <dbReference type="PDB" id="7NH7"/>
    </source>
</evidence>
<name>R1AB_CVHOC</name>
<proteinExistence type="evidence at protein level"/>
<reference key="1">
    <citation type="journal article" date="2005" name="Virology">
        <title>Circulation of genetically distinct contemporary human coronavirus OC43 strains.</title>
        <authorList>
            <person name="Vijgen L."/>
            <person name="Keyaerts E."/>
            <person name="Lemey P."/>
            <person name="Moes E."/>
            <person name="Li S."/>
            <person name="Vandamme A.M."/>
            <person name="Van Ranst M."/>
        </authorList>
    </citation>
    <scope>NUCLEOTIDE SEQUENCE [GENOMIC RNA]</scope>
    <source>
        <strain>Isolate 19572 Belgium 2004</strain>
        <strain>Isolate 87309 Belgium 2003</strain>
    </source>
</reference>
<reference key="2">
    <citation type="journal article" date="2004" name="J. Virol.">
        <title>Human respiratory coronavirus OC43: genetic stability and neuroinvasion.</title>
        <authorList>
            <person name="St Jean J.R."/>
            <person name="Jacomy H."/>
            <person name="Desforges M."/>
            <person name="Vabret A."/>
            <person name="Freymuth F."/>
            <person name="Talbot P.J."/>
        </authorList>
    </citation>
    <scope>NUCLEOTIDE SEQUENCE [GENOMIC RNA]</scope>
    <source>
        <strain>Isolate ATCC VR-759</strain>
        <strain>Isolate clinical OC43-Paris</strain>
    </source>
</reference>
<reference key="3">
    <citation type="journal article" date="2005" name="J. Virol.">
        <title>Complete genomic sequence of human coronavirus OC43: molecular clock analysis suggests a relatively recent zoonotic coronavirus transmission event.</title>
        <authorList>
            <person name="Vijgen L."/>
            <person name="Keyaerts E."/>
            <person name="Moes E."/>
            <person name="Thoelen I."/>
            <person name="Wollants E."/>
            <person name="Lemey P."/>
            <person name="Vandamme A.M."/>
            <person name="Van Ranst M."/>
        </authorList>
    </citation>
    <scope>NUCLEOTIDE SEQUENCE [GENOMIC RNA]</scope>
    <source>
        <strain>Isolate ATCC VR-759</strain>
    </source>
</reference>
<reference key="4">
    <citation type="journal article" date="1999" name="Virus Res.">
        <title>Phylogenetic analysis of a highly conserved region of the polymerase gene from 11 coronaviruses and development of a consensus polymerase chain reaction assay.</title>
        <authorList>
            <person name="Stephensen C.B."/>
            <person name="Casebolt D.B."/>
            <person name="Gangopadhyay N.N."/>
        </authorList>
    </citation>
    <scope>NUCLEOTIDE SEQUENCE [GENOMIC RNA] OF 4871-5177</scope>
    <source>
        <strain>Isolate Tulsa 1999</strain>
    </source>
</reference>
<reference key="5">
    <citation type="journal article" date="2022" name="PLoS Pathog.">
        <title>Nsp1 proteins of human coronaviruses HCoV-OC43 and SARS-CoV2 inhibit stress granule formation.</title>
        <authorList>
            <person name="Dolliver S.M."/>
            <person name="Kleer M."/>
            <person name="Bui-Marinos M.P."/>
            <person name="Ying S."/>
            <person name="Corcoran J.A."/>
            <person name="Khaperskyy D.A."/>
        </authorList>
    </citation>
    <scope>FUNCTION (HOST TRANSLATION INHIBITOR NSP1)</scope>
</reference>
<organismHost>
    <name type="scientific">Homo sapiens</name>
    <name type="common">Human</name>
    <dbReference type="NCBI Taxonomy" id="9606"/>
</organismHost>
<dbReference type="EC" id="3.4.19.12"/>
<dbReference type="EC" id="3.4.22.-"/>
<dbReference type="EC" id="2.7.7.48"/>
<dbReference type="EC" id="2.7.7.50"/>
<dbReference type="EC" id="3.6.4.12"/>
<dbReference type="EC" id="3.6.4.13"/>
<dbReference type="EC" id="2.1.1.56"/>
<dbReference type="EC" id="3.1.13.-"/>
<dbReference type="EC" id="4.6.1.-"/>
<dbReference type="EC" id="2.1.1.57"/>
<dbReference type="EMBL" id="AY903459">
    <property type="protein sequence ID" value="AAX85666.1"/>
    <property type="molecule type" value="Genomic_RNA"/>
</dbReference>
<dbReference type="EMBL" id="AY903460">
    <property type="protein sequence ID" value="AAX85675.1"/>
    <property type="molecule type" value="Genomic_RNA"/>
</dbReference>
<dbReference type="EMBL" id="AY585228">
    <property type="protein sequence ID" value="AAT84351.1"/>
    <property type="molecule type" value="Genomic_RNA"/>
</dbReference>
<dbReference type="EMBL" id="AY585229">
    <property type="protein sequence ID" value="AAT84359.1"/>
    <property type="molecule type" value="Genomic_RNA"/>
</dbReference>
<dbReference type="EMBL" id="AY391777">
    <property type="protein sequence ID" value="AAR01012.1"/>
    <property type="molecule type" value="Genomic_RNA"/>
</dbReference>
<dbReference type="EMBL" id="AF124989">
    <property type="protein sequence ID" value="AAD32993.1"/>
    <property type="molecule type" value="Genomic_RNA"/>
</dbReference>
<dbReference type="PDB" id="7NH7">
    <property type="method" value="X-ray"/>
    <property type="resolution" value="2.20 A"/>
    <property type="chains" value="A=6797-7095"/>
</dbReference>
<dbReference type="PDBsum" id="7NH7"/>
<dbReference type="SMR" id="P0C6X6"/>
<dbReference type="IntAct" id="P0C6X6">
    <property type="interactions" value="60"/>
</dbReference>
<dbReference type="BindingDB" id="P0C6X6"/>
<dbReference type="MEROPS" id="C16.006"/>
<dbReference type="Proteomes" id="UP000007552">
    <property type="component" value="Genome"/>
</dbReference>
<dbReference type="Proteomes" id="UP000100580">
    <property type="component" value="Genome"/>
</dbReference>
<dbReference type="Proteomes" id="UP000159995">
    <property type="component" value="Genome"/>
</dbReference>
<dbReference type="Proteomes" id="UP000161137">
    <property type="component" value="Genome"/>
</dbReference>
<dbReference type="Proteomes" id="UP000180344">
    <property type="component" value="Genome"/>
</dbReference>
<dbReference type="GO" id="GO:0044172">
    <property type="term" value="C:host cell endoplasmic reticulum-Golgi intermediate compartment"/>
    <property type="evidence" value="ECO:0007669"/>
    <property type="project" value="UniProtKB-SubCell"/>
</dbReference>
<dbReference type="GO" id="GO:0033644">
    <property type="term" value="C:host cell membrane"/>
    <property type="evidence" value="ECO:0007669"/>
    <property type="project" value="UniProtKB-SubCell"/>
</dbReference>
<dbReference type="GO" id="GO:0044220">
    <property type="term" value="C:host cell perinuclear region of cytoplasm"/>
    <property type="evidence" value="ECO:0007669"/>
    <property type="project" value="UniProtKB-SubCell"/>
</dbReference>
<dbReference type="GO" id="GO:0016020">
    <property type="term" value="C:membrane"/>
    <property type="evidence" value="ECO:0007669"/>
    <property type="project" value="UniProtKB-KW"/>
</dbReference>
<dbReference type="GO" id="GO:0000175">
    <property type="term" value="F:3'-5'-RNA exonuclease activity"/>
    <property type="evidence" value="ECO:0007669"/>
    <property type="project" value="InterPro"/>
</dbReference>
<dbReference type="GO" id="GO:0043139">
    <property type="term" value="F:5'-3' DNA helicase activity"/>
    <property type="evidence" value="ECO:0007669"/>
    <property type="project" value="TreeGrafter"/>
</dbReference>
<dbReference type="GO" id="GO:0005524">
    <property type="term" value="F:ATP binding"/>
    <property type="evidence" value="ECO:0007669"/>
    <property type="project" value="UniProtKB-KW"/>
</dbReference>
<dbReference type="GO" id="GO:0016887">
    <property type="term" value="F:ATP hydrolysis activity"/>
    <property type="evidence" value="ECO:0007669"/>
    <property type="project" value="RHEA"/>
</dbReference>
<dbReference type="GO" id="GO:0004843">
    <property type="term" value="F:cysteine-type deubiquitinase activity"/>
    <property type="evidence" value="ECO:0007669"/>
    <property type="project" value="UniProtKB-EC"/>
</dbReference>
<dbReference type="GO" id="GO:0004197">
    <property type="term" value="F:cysteine-type endopeptidase activity"/>
    <property type="evidence" value="ECO:0007669"/>
    <property type="project" value="InterPro"/>
</dbReference>
<dbReference type="GO" id="GO:0004519">
    <property type="term" value="F:endonuclease activity"/>
    <property type="evidence" value="ECO:0007669"/>
    <property type="project" value="UniProtKB-KW"/>
</dbReference>
<dbReference type="GO" id="GO:0016829">
    <property type="term" value="F:lyase activity"/>
    <property type="evidence" value="ECO:0007669"/>
    <property type="project" value="UniProtKB-KW"/>
</dbReference>
<dbReference type="GO" id="GO:0004483">
    <property type="term" value="F:mRNA (nucleoside-2'-O-)-methyltransferase activity"/>
    <property type="evidence" value="ECO:0007669"/>
    <property type="project" value="InterPro"/>
</dbReference>
<dbReference type="GO" id="GO:0004482">
    <property type="term" value="F:mRNA 5'-cap (guanine-N7-)-methyltransferase activity"/>
    <property type="evidence" value="ECO:0007669"/>
    <property type="project" value="InterPro"/>
</dbReference>
<dbReference type="GO" id="GO:0008242">
    <property type="term" value="F:omega peptidase activity"/>
    <property type="evidence" value="ECO:0007669"/>
    <property type="project" value="InterPro"/>
</dbReference>
<dbReference type="GO" id="GO:0003724">
    <property type="term" value="F:RNA helicase activity"/>
    <property type="evidence" value="ECO:0007669"/>
    <property type="project" value="UniProtKB-EC"/>
</dbReference>
<dbReference type="GO" id="GO:0003968">
    <property type="term" value="F:RNA-directed RNA polymerase activity"/>
    <property type="evidence" value="ECO:0007669"/>
    <property type="project" value="UniProtKB-KW"/>
</dbReference>
<dbReference type="GO" id="GO:0003727">
    <property type="term" value="F:single-stranded RNA binding"/>
    <property type="evidence" value="ECO:0007669"/>
    <property type="project" value="InterPro"/>
</dbReference>
<dbReference type="GO" id="GO:0008270">
    <property type="term" value="F:zinc ion binding"/>
    <property type="evidence" value="ECO:0007669"/>
    <property type="project" value="UniProtKB-KW"/>
</dbReference>
<dbReference type="GO" id="GO:0006351">
    <property type="term" value="P:DNA-templated transcription"/>
    <property type="evidence" value="ECO:0007669"/>
    <property type="project" value="InterPro"/>
</dbReference>
<dbReference type="GO" id="GO:0006508">
    <property type="term" value="P:proteolysis"/>
    <property type="evidence" value="ECO:0007669"/>
    <property type="project" value="UniProtKB-KW"/>
</dbReference>
<dbReference type="GO" id="GO:0010506">
    <property type="term" value="P:regulation of autophagy"/>
    <property type="evidence" value="ECO:0007669"/>
    <property type="project" value="InterPro"/>
</dbReference>
<dbReference type="GO" id="GO:0039520">
    <property type="term" value="P:symbiont-mediated activation of host autophagy"/>
    <property type="evidence" value="ECO:0007669"/>
    <property type="project" value="UniProtKB-KW"/>
</dbReference>
<dbReference type="GO" id="GO:0039595">
    <property type="term" value="P:symbiont-mediated degradation of host mRNA"/>
    <property type="evidence" value="ECO:0007669"/>
    <property type="project" value="UniProtKB-KW"/>
</dbReference>
<dbReference type="GO" id="GO:0039648">
    <property type="term" value="P:symbiont-mediated perturbation of host ubiquitin-like protein modification"/>
    <property type="evidence" value="ECO:0007669"/>
    <property type="project" value="UniProtKB-KW"/>
</dbReference>
<dbReference type="GO" id="GO:0039657">
    <property type="term" value="P:symbiont-mediated suppression of host gene expression"/>
    <property type="evidence" value="ECO:0007669"/>
    <property type="project" value="UniProtKB-KW"/>
</dbReference>
<dbReference type="GO" id="GO:0039579">
    <property type="term" value="P:symbiont-mediated suppression of host ISG15-protein conjugation"/>
    <property type="evidence" value="ECO:0007669"/>
    <property type="project" value="UniProtKB-KW"/>
</dbReference>
<dbReference type="GO" id="GO:0085034">
    <property type="term" value="P:symbiont-mediated suppression of host NF-kappaB cascade"/>
    <property type="evidence" value="ECO:0007669"/>
    <property type="project" value="UniProtKB-KW"/>
</dbReference>
<dbReference type="GO" id="GO:0039502">
    <property type="term" value="P:symbiont-mediated suppression of host type I interferon-mediated signaling pathway"/>
    <property type="evidence" value="ECO:0007669"/>
    <property type="project" value="UniProtKB-KW"/>
</dbReference>
<dbReference type="GO" id="GO:0019082">
    <property type="term" value="P:viral protein processing"/>
    <property type="evidence" value="ECO:0007669"/>
    <property type="project" value="InterPro"/>
</dbReference>
<dbReference type="GO" id="GO:0039694">
    <property type="term" value="P:viral RNA genome replication"/>
    <property type="evidence" value="ECO:0007669"/>
    <property type="project" value="InterPro"/>
</dbReference>
<dbReference type="GO" id="GO:0075523">
    <property type="term" value="P:viral translational frameshifting"/>
    <property type="evidence" value="ECO:0007669"/>
    <property type="project" value="UniProtKB-KW"/>
</dbReference>
<dbReference type="CDD" id="cd21409">
    <property type="entry name" value="1B_cv_Nsp13-like"/>
    <property type="match status" value="1"/>
</dbReference>
<dbReference type="CDD" id="cd21901">
    <property type="entry name" value="alpha_betaCoV_Nsp10"/>
    <property type="match status" value="1"/>
</dbReference>
<dbReference type="CDD" id="cd21560">
    <property type="entry name" value="betaCoV-Nsp6"/>
    <property type="match status" value="1"/>
</dbReference>
<dbReference type="CDD" id="cd21722">
    <property type="entry name" value="betaCoV_Nsp13-helicase"/>
    <property type="match status" value="1"/>
</dbReference>
<dbReference type="CDD" id="cd21659">
    <property type="entry name" value="betaCoV_Nsp14"/>
    <property type="match status" value="1"/>
</dbReference>
<dbReference type="CDD" id="cd21519">
    <property type="entry name" value="betaCoV_Nsp2_MHV-like"/>
    <property type="match status" value="1"/>
</dbReference>
<dbReference type="CDD" id="cd21666">
    <property type="entry name" value="betaCoV_Nsp5_Mpro"/>
    <property type="match status" value="1"/>
</dbReference>
<dbReference type="CDD" id="cd21827">
    <property type="entry name" value="betaCoV_Nsp7"/>
    <property type="match status" value="1"/>
</dbReference>
<dbReference type="CDD" id="cd21831">
    <property type="entry name" value="betaCoV_Nsp8"/>
    <property type="match status" value="1"/>
</dbReference>
<dbReference type="CDD" id="cd21898">
    <property type="entry name" value="betaCoV_Nsp9"/>
    <property type="match status" value="1"/>
</dbReference>
<dbReference type="CDD" id="cd21732">
    <property type="entry name" value="betaCoV_PLPro"/>
    <property type="match status" value="1"/>
</dbReference>
<dbReference type="CDD" id="cd23528">
    <property type="entry name" value="capping_2-OMTase_betaCoV_Nsp16"/>
    <property type="match status" value="1"/>
</dbReference>
<dbReference type="CDD" id="cd21473">
    <property type="entry name" value="cv_Nsp4_TM"/>
    <property type="match status" value="1"/>
</dbReference>
<dbReference type="CDD" id="cd21524">
    <property type="entry name" value="DPUP_MHV_Nsp3"/>
    <property type="match status" value="1"/>
</dbReference>
<dbReference type="CDD" id="cd21593">
    <property type="entry name" value="HCoV_HKU1-like_RdRp"/>
    <property type="match status" value="1"/>
</dbReference>
<dbReference type="CDD" id="cd21167">
    <property type="entry name" value="M_alpha_beta_cv_Nsp15-like"/>
    <property type="match status" value="1"/>
</dbReference>
<dbReference type="CDD" id="cd21557">
    <property type="entry name" value="Macro_X_Nsp3-like"/>
    <property type="match status" value="1"/>
</dbReference>
<dbReference type="CDD" id="cd21879">
    <property type="entry name" value="MHV-like_Nsp1"/>
    <property type="match status" value="1"/>
</dbReference>
<dbReference type="CDD" id="cd21812">
    <property type="entry name" value="MHV-like_Nsp3_betaSM"/>
    <property type="match status" value="1"/>
</dbReference>
<dbReference type="CDD" id="cd21824">
    <property type="entry name" value="MHV-like_Nsp3_NAB"/>
    <property type="match status" value="1"/>
</dbReference>
<dbReference type="CDD" id="cd21161">
    <property type="entry name" value="NendoU_cv_Nsp15-like"/>
    <property type="match status" value="1"/>
</dbReference>
<dbReference type="CDD" id="cd21171">
    <property type="entry name" value="NTD_alpha_betaCoV_Nsp15-like"/>
    <property type="match status" value="1"/>
</dbReference>
<dbReference type="CDD" id="cd21689">
    <property type="entry name" value="stalk_CoV_Nsp13-like"/>
    <property type="match status" value="1"/>
</dbReference>
<dbReference type="CDD" id="cd21714">
    <property type="entry name" value="TM_Y_MHV-like_Nsp3_C"/>
    <property type="match status" value="1"/>
</dbReference>
<dbReference type="CDD" id="cd21467">
    <property type="entry name" value="Ubl1_cv_Nsp3_N-like"/>
    <property type="match status" value="1"/>
</dbReference>
<dbReference type="CDD" id="cd21401">
    <property type="entry name" value="ZBD_cv_Nsp13-like"/>
    <property type="match status" value="1"/>
</dbReference>
<dbReference type="FunFam" id="1.10.150.420:FF:000001">
    <property type="entry name" value="Replicase polyprotein"/>
    <property type="match status" value="1"/>
</dbReference>
<dbReference type="Gene3D" id="1.10.8.1190">
    <property type="match status" value="2"/>
</dbReference>
<dbReference type="Gene3D" id="2.60.120.1680">
    <property type="match status" value="1"/>
</dbReference>
<dbReference type="Gene3D" id="3.10.20.350">
    <property type="match status" value="1"/>
</dbReference>
<dbReference type="Gene3D" id="3.10.20.540">
    <property type="match status" value="1"/>
</dbReference>
<dbReference type="Gene3D" id="3.40.50.11580">
    <property type="match status" value="1"/>
</dbReference>
<dbReference type="Gene3D" id="6.10.140.2090">
    <property type="match status" value="1"/>
</dbReference>
<dbReference type="Gene3D" id="1.10.150.420">
    <property type="entry name" value="Coronavirus nonstructural protein 4 C-terminus"/>
    <property type="match status" value="1"/>
</dbReference>
<dbReference type="Gene3D" id="3.40.220.10">
    <property type="entry name" value="Leucine Aminopeptidase, subunit E, domain 1"/>
    <property type="match status" value="1"/>
</dbReference>
<dbReference type="Gene3D" id="1.10.1840.10">
    <property type="entry name" value="main proteinase (3clpro) structure, domain 3"/>
    <property type="match status" value="1"/>
</dbReference>
<dbReference type="Gene3D" id="3.30.160.820">
    <property type="entry name" value="Nsp15 N-terminal domain-like"/>
    <property type="match status" value="1"/>
</dbReference>
<dbReference type="Gene3D" id="1.10.8.370">
    <property type="entry name" value="nsp7 replicase"/>
    <property type="match status" value="1"/>
</dbReference>
<dbReference type="Gene3D" id="3.30.70.3540">
    <property type="entry name" value="Nsp8 replicase, head domain"/>
    <property type="match status" value="1"/>
</dbReference>
<dbReference type="Gene3D" id="3.40.50.300">
    <property type="entry name" value="P-loop containing nucleotide triphosphate hydrolases"/>
    <property type="match status" value="2"/>
</dbReference>
<dbReference type="Gene3D" id="2.40.10.250">
    <property type="entry name" value="Replicase NSP9"/>
    <property type="match status" value="1"/>
</dbReference>
<dbReference type="Gene3D" id="3.40.50.11020">
    <property type="entry name" value="Replicase polyprotein, nucleic acid-binding domain"/>
    <property type="match status" value="1"/>
</dbReference>
<dbReference type="Gene3D" id="2.40.10.10">
    <property type="entry name" value="Trypsin-like serine proteases"/>
    <property type="match status" value="2"/>
</dbReference>
<dbReference type="Gene3D" id="3.40.50.150">
    <property type="entry name" value="Vaccinia Virus protein VP39"/>
    <property type="match status" value="1"/>
</dbReference>
<dbReference type="InterPro" id="IPR027351">
    <property type="entry name" value="(+)RNA_virus_helicase_core_dom"/>
</dbReference>
<dbReference type="InterPro" id="IPR046443">
    <property type="entry name" value="a/bCoV_NSP1_glob"/>
</dbReference>
<dbReference type="InterPro" id="IPR046440">
    <property type="entry name" value="AV_NSP11N_COV_NSP15M"/>
</dbReference>
<dbReference type="InterPro" id="IPR022570">
    <property type="entry name" value="B-CoV_A_NSP1"/>
</dbReference>
<dbReference type="InterPro" id="IPR046442">
    <property type="entry name" value="bCoV_NSP1_C"/>
</dbReference>
<dbReference type="InterPro" id="IPR050534">
    <property type="entry name" value="Coronavir_polyprotein_1ab"/>
</dbReference>
<dbReference type="InterPro" id="IPR043608">
    <property type="entry name" value="CoV_NSP15_M"/>
</dbReference>
<dbReference type="InterPro" id="IPR043606">
    <property type="entry name" value="CoV_NSP15_N"/>
</dbReference>
<dbReference type="InterPro" id="IPR043613">
    <property type="entry name" value="CoV_NSP2_C"/>
</dbReference>
<dbReference type="InterPro" id="IPR047573">
    <property type="entry name" value="CoV_NSP2_M"/>
</dbReference>
<dbReference type="InterPro" id="IPR049894">
    <property type="entry name" value="COV_NSP3_3ECTO"/>
</dbReference>
<dbReference type="InterPro" id="IPR043611">
    <property type="entry name" value="CoV_NSP3_C"/>
</dbReference>
<dbReference type="InterPro" id="IPR047566">
    <property type="entry name" value="CoV_NSP3_Y"/>
</dbReference>
<dbReference type="InterPro" id="IPR032505">
    <property type="entry name" value="CoV_NSP4_C"/>
</dbReference>
<dbReference type="InterPro" id="IPR043612">
    <property type="entry name" value="CoV_NSP4_N"/>
</dbReference>
<dbReference type="InterPro" id="IPR043502">
    <property type="entry name" value="DNA/RNA_pol_sf"/>
</dbReference>
<dbReference type="InterPro" id="IPR041679">
    <property type="entry name" value="DNA2/NAM7-like_C"/>
</dbReference>
<dbReference type="InterPro" id="IPR022733">
    <property type="entry name" value="DPUP_SUD_C_bCoV"/>
</dbReference>
<dbReference type="InterPro" id="IPR037227">
    <property type="entry name" value="EndoU-like"/>
</dbReference>
<dbReference type="InterPro" id="IPR002589">
    <property type="entry name" value="Macro_dom"/>
</dbReference>
<dbReference type="InterPro" id="IPR043472">
    <property type="entry name" value="Macro_dom-like"/>
</dbReference>
<dbReference type="InterPro" id="IPR044371">
    <property type="entry name" value="Macro_X_NSP3-like"/>
</dbReference>
<dbReference type="InterPro" id="IPR046435">
    <property type="entry name" value="N7_MTase_CoV"/>
</dbReference>
<dbReference type="InterPro" id="IPR043609">
    <property type="entry name" value="NendoU_nidovirus"/>
</dbReference>
<dbReference type="InterPro" id="IPR044863">
    <property type="entry name" value="NIRAN"/>
</dbReference>
<dbReference type="InterPro" id="IPR046438">
    <property type="entry name" value="NIV_2_O_MTASE"/>
</dbReference>
<dbReference type="InterPro" id="IPR046436">
    <property type="entry name" value="NIV_EXON"/>
</dbReference>
<dbReference type="InterPro" id="IPR036333">
    <property type="entry name" value="NSP10_sf_CoV"/>
</dbReference>
<dbReference type="InterPro" id="IPR047570">
    <property type="entry name" value="NSP12_IF_CoV"/>
</dbReference>
<dbReference type="InterPro" id="IPR044343">
    <property type="entry name" value="NSP13_1B_dom_CoV"/>
</dbReference>
<dbReference type="InterPro" id="IPR048673">
    <property type="entry name" value="NSP13_stalk_CoV"/>
</dbReference>
<dbReference type="InterPro" id="IPR048672">
    <property type="entry name" value="NSP13_ZBD_CoV"/>
</dbReference>
<dbReference type="InterPro" id="IPR027352">
    <property type="entry name" value="NSP13_ZBD_CoV-like"/>
</dbReference>
<dbReference type="InterPro" id="IPR044315">
    <property type="entry name" value="NSP14_betaCoV"/>
</dbReference>
<dbReference type="InterPro" id="IPR009466">
    <property type="entry name" value="NSP14_CoV"/>
</dbReference>
<dbReference type="InterPro" id="IPR044330">
    <property type="entry name" value="NSP15_alpha_betaCoV_N"/>
</dbReference>
<dbReference type="InterPro" id="IPR044322">
    <property type="entry name" value="NSP15_M_alpha_beta_CoV"/>
</dbReference>
<dbReference type="InterPro" id="IPR043174">
    <property type="entry name" value="NSP15_middle_sf"/>
</dbReference>
<dbReference type="InterPro" id="IPR042515">
    <property type="entry name" value="NSP15_N_CoV"/>
</dbReference>
<dbReference type="InterPro" id="IPR044401">
    <property type="entry name" value="NSP15_NendoU_CoV"/>
</dbReference>
<dbReference type="InterPro" id="IPR009461">
    <property type="entry name" value="NSP16_CoV-like"/>
</dbReference>
<dbReference type="InterPro" id="IPR044384">
    <property type="entry name" value="NSP2_MHV-like"/>
</dbReference>
<dbReference type="InterPro" id="IPR043615">
    <property type="entry name" value="NSP2_N_CoV"/>
</dbReference>
<dbReference type="InterPro" id="IPR044381">
    <property type="entry name" value="NSP3_DPUP_MHV"/>
</dbReference>
<dbReference type="InterPro" id="IPR047567">
    <property type="entry name" value="NSP3_G2M_bCoV"/>
</dbReference>
<dbReference type="InterPro" id="IPR032592">
    <property type="entry name" value="NSP3_NAB_bCoV"/>
</dbReference>
<dbReference type="InterPro" id="IPR042570">
    <property type="entry name" value="NSP3_NAB_bCoV_sf"/>
</dbReference>
<dbReference type="InterPro" id="IPR044357">
    <property type="entry name" value="NSP3_Ubl1_dom_CoV"/>
</dbReference>
<dbReference type="InterPro" id="IPR044353">
    <property type="entry name" value="Nsp3_Ubl2_dom_CoV"/>
</dbReference>
<dbReference type="InterPro" id="IPR038083">
    <property type="entry name" value="NSP3A-like"/>
</dbReference>
<dbReference type="InterPro" id="IPR038123">
    <property type="entry name" value="NSP4_C_sf_CoV"/>
</dbReference>
<dbReference type="InterPro" id="IPR044367">
    <property type="entry name" value="NSP6_betaCoV"/>
</dbReference>
<dbReference type="InterPro" id="IPR043610">
    <property type="entry name" value="NSP6_CoV"/>
</dbReference>
<dbReference type="InterPro" id="IPR014828">
    <property type="entry name" value="NSP7_CoV"/>
</dbReference>
<dbReference type="InterPro" id="IPR037204">
    <property type="entry name" value="NSP7_sf_CoV"/>
</dbReference>
<dbReference type="InterPro" id="IPR014829">
    <property type="entry name" value="NSP8_CoV"/>
</dbReference>
<dbReference type="InterPro" id="IPR037230">
    <property type="entry name" value="NSP8_sf_CoV"/>
</dbReference>
<dbReference type="InterPro" id="IPR014822">
    <property type="entry name" value="NSP9_CoV"/>
</dbReference>
<dbReference type="InterPro" id="IPR036499">
    <property type="entry name" value="NSP9_sf_CoV"/>
</dbReference>
<dbReference type="InterPro" id="IPR027417">
    <property type="entry name" value="P-loop_NTPase"/>
</dbReference>
<dbReference type="InterPro" id="IPR002705">
    <property type="entry name" value="Pept_C30/C16_B_coronavir"/>
</dbReference>
<dbReference type="InterPro" id="IPR013016">
    <property type="entry name" value="Peptidase_C16_CoV"/>
</dbReference>
<dbReference type="InterPro" id="IPR008740">
    <property type="entry name" value="Peptidase_C30_CoV"/>
</dbReference>
<dbReference type="InterPro" id="IPR043477">
    <property type="entry name" value="Peptidase_C30_dom3_CoV"/>
</dbReference>
<dbReference type="InterPro" id="IPR009003">
    <property type="entry name" value="Peptidase_S1_PA"/>
</dbReference>
<dbReference type="InterPro" id="IPR043504">
    <property type="entry name" value="Peptidase_S1_PA_chymotrypsin"/>
</dbReference>
<dbReference type="InterPro" id="IPR043177">
    <property type="entry name" value="PLpro_N_sf_CoV"/>
</dbReference>
<dbReference type="InterPro" id="IPR043503">
    <property type="entry name" value="PLpro_palm_finger_dom_CoV"/>
</dbReference>
<dbReference type="InterPro" id="IPR043178">
    <property type="entry name" value="PLpro_thumb_sf_CoV"/>
</dbReference>
<dbReference type="InterPro" id="IPR046441">
    <property type="entry name" value="RdRp_CoV"/>
</dbReference>
<dbReference type="InterPro" id="IPR044347">
    <property type="entry name" value="RdRp_HCoV_HKU1-like"/>
</dbReference>
<dbReference type="InterPro" id="IPR009469">
    <property type="entry name" value="RdRp_N_CoV"/>
</dbReference>
<dbReference type="InterPro" id="IPR001205">
    <property type="entry name" value="RNA-dir_pol_C"/>
</dbReference>
<dbReference type="InterPro" id="IPR007094">
    <property type="entry name" value="RNA-dir_pol_PSvirus"/>
</dbReference>
<dbReference type="InterPro" id="IPR018995">
    <property type="entry name" value="RNA_synth_NSP10_CoV"/>
</dbReference>
<dbReference type="InterPro" id="IPR029063">
    <property type="entry name" value="SAM-dependent_MTases_sf"/>
</dbReference>
<dbReference type="PANTHER" id="PTHR43788">
    <property type="entry name" value="DNA2/NAM7 HELICASE FAMILY MEMBER"/>
    <property type="match status" value="1"/>
</dbReference>
<dbReference type="PANTHER" id="PTHR43788:SF16">
    <property type="entry name" value="HELICASE WITH ZINC FINGER 2"/>
    <property type="match status" value="1"/>
</dbReference>
<dbReference type="Pfam" id="PF13087">
    <property type="entry name" value="AAA_12"/>
    <property type="match status" value="1"/>
</dbReference>
<dbReference type="Pfam" id="PF13604">
    <property type="entry name" value="AAA_30"/>
    <property type="match status" value="1"/>
</dbReference>
<dbReference type="Pfam" id="PF11963">
    <property type="entry name" value="B-CoV_A_NSP1"/>
    <property type="match status" value="1"/>
</dbReference>
<dbReference type="Pfam" id="PF16251">
    <property type="entry name" value="bCoV_NAB"/>
    <property type="match status" value="1"/>
</dbReference>
<dbReference type="Pfam" id="PF06471">
    <property type="entry name" value="CoV_ExoN"/>
    <property type="match status" value="1"/>
</dbReference>
<dbReference type="Pfam" id="PF06460">
    <property type="entry name" value="CoV_Methyltr_2"/>
    <property type="match status" value="1"/>
</dbReference>
<dbReference type="Pfam" id="PF09401">
    <property type="entry name" value="CoV_NSP10"/>
    <property type="match status" value="1"/>
</dbReference>
<dbReference type="Pfam" id="PF20631">
    <property type="entry name" value="CoV_NSP13_1B"/>
    <property type="match status" value="1"/>
</dbReference>
<dbReference type="Pfam" id="PF20633">
    <property type="entry name" value="CoV_NSP13_stalk"/>
    <property type="match status" value="1"/>
</dbReference>
<dbReference type="Pfam" id="PF20632">
    <property type="entry name" value="CoV_NSP13_ZBD"/>
    <property type="match status" value="1"/>
</dbReference>
<dbReference type="Pfam" id="PF19215">
    <property type="entry name" value="CoV_NSP15_C"/>
    <property type="match status" value="1"/>
</dbReference>
<dbReference type="Pfam" id="PF19216">
    <property type="entry name" value="CoV_NSP15_M"/>
    <property type="match status" value="1"/>
</dbReference>
<dbReference type="Pfam" id="PF19219">
    <property type="entry name" value="CoV_NSP15_N"/>
    <property type="match status" value="1"/>
</dbReference>
<dbReference type="Pfam" id="PF19218">
    <property type="entry name" value="CoV_NSP3_C"/>
    <property type="match status" value="1"/>
</dbReference>
<dbReference type="Pfam" id="PF16348">
    <property type="entry name" value="CoV_NSP4_C"/>
    <property type="match status" value="1"/>
</dbReference>
<dbReference type="Pfam" id="PF19217">
    <property type="entry name" value="CoV_NSP4_N"/>
    <property type="match status" value="1"/>
</dbReference>
<dbReference type="Pfam" id="PF19213">
    <property type="entry name" value="CoV_NSP6"/>
    <property type="match status" value="1"/>
</dbReference>
<dbReference type="Pfam" id="PF08716">
    <property type="entry name" value="CoV_NSP7"/>
    <property type="match status" value="1"/>
</dbReference>
<dbReference type="Pfam" id="PF08717">
    <property type="entry name" value="CoV_NSP8"/>
    <property type="match status" value="1"/>
</dbReference>
<dbReference type="Pfam" id="PF08710">
    <property type="entry name" value="CoV_NSP9"/>
    <property type="match status" value="1"/>
</dbReference>
<dbReference type="Pfam" id="PF08715">
    <property type="entry name" value="CoV_peptidase"/>
    <property type="match status" value="1"/>
</dbReference>
<dbReference type="Pfam" id="PF06478">
    <property type="entry name" value="CoV_RPol_N"/>
    <property type="match status" value="1"/>
</dbReference>
<dbReference type="Pfam" id="PF01661">
    <property type="entry name" value="Macro"/>
    <property type="match status" value="1"/>
</dbReference>
<dbReference type="Pfam" id="PF22104">
    <property type="entry name" value="MHV_Nsp3_DPUP"/>
    <property type="match status" value="1"/>
</dbReference>
<dbReference type="Pfam" id="PF01831">
    <property type="entry name" value="Peptidase_C16"/>
    <property type="match status" value="1"/>
</dbReference>
<dbReference type="Pfam" id="PF05409">
    <property type="entry name" value="Peptidase_C30"/>
    <property type="match status" value="1"/>
</dbReference>
<dbReference type="Pfam" id="PF00680">
    <property type="entry name" value="RdRP_1"/>
    <property type="match status" value="1"/>
</dbReference>
<dbReference type="SMART" id="SM00506">
    <property type="entry name" value="A1pp"/>
    <property type="match status" value="1"/>
</dbReference>
<dbReference type="SUPFAM" id="SSF144246">
    <property type="entry name" value="Coronavirus NSP10-like"/>
    <property type="match status" value="1"/>
</dbReference>
<dbReference type="SUPFAM" id="SSF140367">
    <property type="entry name" value="Coronavirus NSP7-like"/>
    <property type="match status" value="1"/>
</dbReference>
<dbReference type="SUPFAM" id="SSF143076">
    <property type="entry name" value="Coronavirus NSP8-like"/>
    <property type="match status" value="1"/>
</dbReference>
<dbReference type="SUPFAM" id="SSF56672">
    <property type="entry name" value="DNA/RNA polymerases"/>
    <property type="match status" value="1"/>
</dbReference>
<dbReference type="SUPFAM" id="SSF142877">
    <property type="entry name" value="EndoU-like"/>
    <property type="match status" value="1"/>
</dbReference>
<dbReference type="SUPFAM" id="SSF52949">
    <property type="entry name" value="Macro domain-like"/>
    <property type="match status" value="1"/>
</dbReference>
<dbReference type="SUPFAM" id="SSF159936">
    <property type="entry name" value="NSP3A-like"/>
    <property type="match status" value="1"/>
</dbReference>
<dbReference type="SUPFAM" id="SSF52540">
    <property type="entry name" value="P-loop containing nucleoside triphosphate hydrolases"/>
    <property type="match status" value="1"/>
</dbReference>
<dbReference type="SUPFAM" id="SSF101816">
    <property type="entry name" value="Replicase NSP9"/>
    <property type="match status" value="1"/>
</dbReference>
<dbReference type="SUPFAM" id="SSF53335">
    <property type="entry name" value="S-adenosyl-L-methionine-dependent methyltransferases"/>
    <property type="match status" value="1"/>
</dbReference>
<dbReference type="SUPFAM" id="SSF50494">
    <property type="entry name" value="Trypsin-like serine proteases"/>
    <property type="match status" value="1"/>
</dbReference>
<dbReference type="PROSITE" id="PS51961">
    <property type="entry name" value="AV_NSP11N_COV_NSP15M"/>
    <property type="match status" value="1"/>
</dbReference>
<dbReference type="PROSITE" id="PS51963">
    <property type="entry name" value="BCOV_NSP1_C"/>
    <property type="match status" value="1"/>
</dbReference>
<dbReference type="PROSITE" id="PS51942">
    <property type="entry name" value="BCOV_NSP3C_C"/>
    <property type="match status" value="1"/>
</dbReference>
<dbReference type="PROSITE" id="PS51994">
    <property type="entry name" value="BCOV_NSP3E_G2M"/>
    <property type="match status" value="1"/>
</dbReference>
<dbReference type="PROSITE" id="PS51945">
    <property type="entry name" value="BCOV_NSP3E_NAB"/>
    <property type="match status" value="1"/>
</dbReference>
<dbReference type="PROSITE" id="PS51993">
    <property type="entry name" value="COV_3ECTO"/>
    <property type="match status" value="1"/>
</dbReference>
<dbReference type="PROSITE" id="PS51952">
    <property type="entry name" value="COV_EXON_MTASE_COACT"/>
    <property type="match status" value="1"/>
</dbReference>
<dbReference type="PROSITE" id="PS51954">
    <property type="entry name" value="COV_N7_MTASE"/>
    <property type="match status" value="1"/>
</dbReference>
<dbReference type="PROSITE" id="PS51962">
    <property type="entry name" value="COV_NSP1"/>
    <property type="match status" value="1"/>
</dbReference>
<dbReference type="PROSITE" id="PS52000">
    <property type="entry name" value="COV_NSP12_IF"/>
    <property type="match status" value="1"/>
</dbReference>
<dbReference type="PROSITE" id="PS51948">
    <property type="entry name" value="COV_NSP12_RDRP"/>
    <property type="match status" value="1"/>
</dbReference>
<dbReference type="PROSITE" id="PS51960">
    <property type="entry name" value="COV_NSP15_NTD"/>
    <property type="match status" value="1"/>
</dbReference>
<dbReference type="PROSITE" id="PS51991">
    <property type="entry name" value="COV_NSP2_C"/>
    <property type="match status" value="1"/>
</dbReference>
<dbReference type="PROSITE" id="PS51990">
    <property type="entry name" value="COV_NSP2_M"/>
    <property type="match status" value="1"/>
</dbReference>
<dbReference type="PROSITE" id="PS51989">
    <property type="entry name" value="COV_NSP2_N"/>
    <property type="match status" value="1"/>
</dbReference>
<dbReference type="PROSITE" id="PS51992">
    <property type="entry name" value="COV_NSP3_Y"/>
    <property type="match status" value="1"/>
</dbReference>
<dbReference type="PROSITE" id="PS51943">
    <property type="entry name" value="COV_NSP3A_UBL"/>
    <property type="match status" value="1"/>
</dbReference>
<dbReference type="PROSITE" id="PS51944">
    <property type="entry name" value="COV_NSP3D_UBL"/>
    <property type="match status" value="1"/>
</dbReference>
<dbReference type="PROSITE" id="PS51946">
    <property type="entry name" value="COV_NSP4C"/>
    <property type="match status" value="1"/>
</dbReference>
<dbReference type="PROSITE" id="PS51949">
    <property type="entry name" value="COV_NSP7"/>
    <property type="match status" value="1"/>
</dbReference>
<dbReference type="PROSITE" id="PS51950">
    <property type="entry name" value="COV_NSP8"/>
    <property type="match status" value="1"/>
</dbReference>
<dbReference type="PROSITE" id="PS51951">
    <property type="entry name" value="COV_NSP9_SSRNA_BD"/>
    <property type="match status" value="1"/>
</dbReference>
<dbReference type="PROSITE" id="PS51653">
    <property type="entry name" value="CV_ZBD"/>
    <property type="match status" value="1"/>
</dbReference>
<dbReference type="PROSITE" id="PS51442">
    <property type="entry name" value="M_PRO"/>
    <property type="match status" value="1"/>
</dbReference>
<dbReference type="PROSITE" id="PS51154">
    <property type="entry name" value="MACRO"/>
    <property type="match status" value="1"/>
</dbReference>
<dbReference type="PROSITE" id="PS51958">
    <property type="entry name" value="NENDOU"/>
    <property type="match status" value="1"/>
</dbReference>
<dbReference type="PROSITE" id="PS51947">
    <property type="entry name" value="NIRAN"/>
    <property type="match status" value="1"/>
</dbReference>
<dbReference type="PROSITE" id="PS51955">
    <property type="entry name" value="NIV_2_O_MTASE"/>
    <property type="match status" value="1"/>
</dbReference>
<dbReference type="PROSITE" id="PS51953">
    <property type="entry name" value="NIV_EXON"/>
    <property type="match status" value="1"/>
</dbReference>
<dbReference type="PROSITE" id="PS51124">
    <property type="entry name" value="PEPTIDASE_C16"/>
    <property type="match status" value="2"/>
</dbReference>
<dbReference type="PROSITE" id="PS51657">
    <property type="entry name" value="PSRV_HELICASE"/>
    <property type="match status" value="1"/>
</dbReference>
<dbReference type="PROSITE" id="PS50507">
    <property type="entry name" value="RDRP_SSRNA_POS"/>
    <property type="match status" value="1"/>
</dbReference>
<sequence>MSKINKYGLELHWAPEFPWMFEDAEEKLDNPSSSEVDMICSTTAQKLETDGICPENHVMVDCRRLLKQECCVQSSLIREIVMNASPYHLEVLLQDALQSREAVLVTTPLGMSLEACYVRGCNPKGWTMGLFRRRSVCNTGRCTVNKHVAYQLYMIDPAGVCLGAGQFVGWVIPLAFMPVQSRKFIVPWVMYLRKRGEKGAYNKDHGCGGFGHVYDFKVEDAYDQVHDEPKGKFSKKAYALIRGYRGVKPLLYVDQYGCDYTGSLADGLEAYADKTLQEMKALFPTWSQELPFDVIVAWHVVRDPRYVMRLQSAATICSVAYVANPTEDLCDGSVVIKEPVHVYADDSIILRQYNLFDIMSHFYMEADTVVNAFYGVALKDCGFVMQFGYIDCEQDSCDFKGWIPGNMIDGFACTTCGHVYEVGDLIAQSSGVLPVNPVLHTKSAAGYGGFGCKDSFTLYGQTVVYFGGCVYWSPARNIWIPILKSSVKSYDSLVYTGVLGCKAIVKETNLICKALYLDYVQHKCGNLHQRELLGVSDVWHKQLLINRGVYKPLLENIDYFNMRRAKFSLETFTVCADGFMPFLLDDLVPRAYYLAVSGQAFCDYADKLCHAVVSKSKELLDVSLDSLGAAIHYLNSKIVDLAQHFSDFGTSFVSKIVHFFKTFTTSTALAFAWVLFHVLHGAYIVVESDIYFVKNIPRYASAVAQAFQSVAKVVLDSLRVTFIDGLSCFKIGRRRICLSGRKIYEVERGLLHSSQLPLDVYDLTMPSQVQKAKQKPIYLKGSGSDFSLADSVVEVVTTSLTPCGYSEPPKVADKICIVDNVYMAKAGDKYYPVVVDDHVGLLDQAWRVPCAGRRVTFKEQPTVKEIISMPKIIKVFYELDNDFNTILNTACGVFEVDDTVDMEEFYAVVIDAIEEKLSPCKELEGVGAKVSAFLQKLEDNPLFLFDEAGEEVFAPKLYCAFTAPEDDDFLEESDVEEDDVEGEETDLTITSAGQPCVASEQEESSEVLEDTLDDGPSVETSDSQVEEDVEMSDFVDLESVIQDYENVCFEFYTTEPEFVKVLGLYVPKATRNNCWLRSVLAVMQKLPCQFKDKNLQDLWVLYKQQYSQLFVDTLVNKIPANIVLPQGGYVADFAYWFLTLCDWQCVAYWKCIKCDLALKLKGLDAMFFYGDVVSHICKCGESMVLIDVDVPFTAHFALKDKLFCAFITKRIVYKAACVVDVNDSHSMAVVDGKQIDDHRITSITSDKFDFIIGHGMSFSMTTFEIAQLYGSCITPNVCFVKGDIIKVSKLVKAEVVVNPANGHMVHGGGVAKAIAVAAGQQFVKETTNMVKSKGVCATGDCYVSTGGKLCKTVLNVVGPDARTQGKQSYVLLERVYKHFNNYDCVVTTLISAGIFSVPSDVSLTYLLGTAKKQVVLVSNNQEDFDLISKCQITAVEGTKKLAARLSFNVGRSIVYETDANKLILINDVAFVSTFNVLQDVLSLRHDIALDDDARTFVQSNVDVLPEGWRVVNKFYQINGVRTVKYFECTGGIDICSQDKVFGYVQQGIFNKATVAQIKALFLDKVDILLTVDGVNFTNRFVPVGESFGKSLGNVFCDGVNVTKHKCDINYKGKVFFQFDNLSSEDLKAVRSSFNFDQKELLAYYNMLVNCFKWQVVVNGKYFTFKQANNNCFVNVSCLMLQSLHLTFKIVQWQEAWLEFRSGRPARFVALVLAKGGFKFGDPADSRDFLRVVFSQVDLTGAICDFEIACKCGVKQEQRTGLDAVMHFGTLSREDLEIGYTVDCSCGKKLIHCVRFDVPFLICSNTPASVKLPKGVGSANIFIGDNVGHYVHVKCEQSYQLYDASNVKKVTDVTGKLSDCLYLKNLKQTFKSVLTTYYLDDVKKIEYKPDLSQYYCDGGKYYTQRIIKAQFKTFEKVDGVYTNFKLIGHTVCDSLNSKLGFDSSKEFVEYKITEWPTATGDVVLANDDLYVKRYERGCITFGKPVIWLSHEKASLNSLTYFNRPLLVDDNKFDVLKVDDVDDSGDSSESGAKETKEINIIKLSGVKKPFKVEDSVIVNDDTSETKYVKSLSIVDVYDMWLTGCKYVVRTANALSRAVNVPTIRKFIKFGMTLVSIPIDLLNLREIKPAVNVVKAVRNKTSACFNFIKWLFVLLFGWIKISADNKVIYTTEIASKLTCKLVALAFKNAFLTFKWSMVARGACIIATIFLLWFNFIYANVIFSDFYLPKIGFLPTFVGKIAQWIKNTFSLVTICDLYSIQDVGFKNQYCNGSIACQFCLAGFDMLDNYKAIDVVQYEADRRAFVDYTGVLKIVIELIVSYALYTAWFYPLFALISIQILTTWLPELFMLSTLHWSFRLLVALANMLPAHVFMRFYIIIASFIKLFSLFKHVAYGCSKSGCLFCYKRNRSLRVKCSTIVGGMIRYYDVMANGGTGFCSKHQWNCIDCDSYKPGNTFITVEAALDLSKELKRPIQPTDVAYHTVTDVKQVGCSMRLFYDRDGQRIYDDVNASLFVDYSNLLHSKVKSVPNMHVVVVENDADKANFLNAAVFYAQSLFRPILMVDKNLITTANTGTSVTETMFDVYVDTFLSMFDVDKKSLNALIATAHSSIKQGTQIYKVLDTFLSCARKSCSIDSDVDTKCLADSVMSAVSAGLELTDESCNNLVPTYLKSDNIVAADLGVLIQNSAKHVQGNVAKIAGVSCIWSVDAFNQFSSDFQHKLKKACCKTGLKLKLTYNKQMANVSVLTTPFSLKGGAVFSYFVYVCFVLSLVCFIGLWCLMPTYTVHKSDFQLPVYASYKVLDNGVIRDVSVEDVCFANKFEQFDQWYESTFGLSYYSNSMACPIVVAVIDQDFGSTVFNVPTKVLRYGYHVLHFITHALSADGVQCYTPHSQISYSNFYASGCVLSSACTMFTMADGSPQPYCYTDGLMQNASLYSSLVPHVRYNLANAKGFIRFPEVLREGLVRVVRTRSMSYCRVGLCEEADEGICFNFNGSWVLNNDYYRSLPGTFCGRDVFDLIYQLFKGLAQPVDFLALTASSIAGAILAVIVVLVFYYLIKLKRAFGDYTSVVFVNVIVWCVNFMMLFVFQVYPTLSCVYAICYFYATLYFPSEISVIMHLQWLVMYGTIMPLWFCLLYIAVVVSNHAFWVFSYCRKLGTSVRSDGTFEEMALTTFMITKDSYCKLKNSLSDVAFNRYLSLYNKYRYYSGKMDTAAYREAACSQLAKAMDTFTNNNGSDVLYQPPTASVSTSFLQSGIVKMVNPTSKVEPCVVSVTYGNMTLNGLWLDDKVYCPRHVICSASDMTNPDYTNLLCRVTSSDFTVLFDRLSLTVMSYQMRGCMLVLTVTLQNSRTPKYTFGVVKPGETFTVLAAYNGKPQGAFHVTMRSSYTIKGSFLCGSCGSVGYVIMGDCVKFVYMHQLELSTGCHTGTDFNGDFYGPYKDAQVVQLPIQDYIQSVNFLAWLYAAILNNCNWFIQSDKCSVEDFNVWALSNGFSQVKSDLVIDALASMTGVSLETLLAAIKRLKNGFQGRQIMGSCSFEDELTPSDVYQQLAGIKLQSKRTRLFKGTVCWIMASTFLFSCIITAFVKWTMFMYVTTNMFSITFCALCVISLAMLLVKHKHLYLTMYITPVLFTLLYNNYLVVYKHTFRGYVYAWLSYYVPSVEYTYTDEVIYGMLLLVGMVFVTLRSINHDLFSFIMFVGRLISVFSLWYKGSNLEEEILLMLASLFGTYTWTTVLSMAVAKVIAKWVAVNVLYFTDIPQIKIVLLCYLFIGYIISCYWGLFSLMNSLFRMPLGVYNYKISVQELRYMNANGLRPPKNSFEALMLNFKLLGIGGVPIIEVSQFQSKLTDVKCANVVLLNCLQHLHVASNSKLWHYCSTLHNEILATSDLSVAFEKLAQLLIVLFANPAAVDSKCLTSIEEVCDDYAKDNTVLQALQSEFVNMASFVEYEVAKKNLDEARFSGSANQQQLKQLEKACNIAKSAYERDRAVAKKLERMADLALTNMYKEARINDKKSKVVSALQTMLFSMVRKLDNQALNSILDNAVKGCVPLNAIPSLAANTLNIIVPDKSVYDQIVDNIYVTYAGNVWQIQTIQDSDGTNKQLNEISDDCNWPLVIIANRYNEVSATVLQNNELMPAKLKIQVVNSGPDQTCNTPTQCYYNNSNNGKIVYAILSDVDGLKYTKILKDDGNFVVLELDPPCKFTVQDAKGLKIKYLYFVKGCNTLARGWVVGTISSTVRLQAGTATEYASNSSILSLCAFSVDPKKTYLDFIQQGGTPIANCVKMLCDHAGTGMAITVKPDATTSQDSYGGASVCIYCRARVEHPDVDGLCKLRGKFVQVPVGIKDPVSYVLTHDVCRVCGFWRDGSCSCVSTDTTVQSKDTNFLNRVRGASVDARLVPCASGLSTDVQLRAFDIYNASVAGIGLHLKVNCCRFQRVDENGDKLDQFFVVKRTDLTIYNREMKCYERVKDCKFVAEHDFFTFDVEGSRVPHIVRKDLTKYTMLDLCYALRHFDRNDCMLLCDILSIYAGCEQSYFTKKDWYDFVENPDIINVYKKLGPIFNRALVSATEFADKLVEVGLVGVLTLDNQDLNGKWYDFGDYVIAAPGCGVAIADSYYSYIMPMLTMCHALDCELYVNNAYRLFDLVQYDFTDYKLELFNKYFKHWSMPYHPNTVDCQDDRCIIHCANFNILFSMVLPNTCFGPLVRQIFVDGVPFVVSIGYHYKELGIVMNMDVDTHRYRLSLKDLLLYAADPALHVASASALYDLRTCCFSVAAITSGVKFQTVKPGNFNQDFYDFVLSKGLLKEGSSVDLKHFFFTQDGNAAITDYNYYKYNLPTMVDIKQLLFVLEVVYKYFEIYDGGCIPASQVIVNNYDKSAGYPFNKFGKARLYYEALSFEEQDEIYAYTKRNVLPTLTQMNLKYAISAKNRARTVAGVSILSTMTGRMFHQKCLKSIAATRGVPVVIGTTKFYGGWDDMLRRLIKDVDNPVLMGWDYPKCDRAMPNILRIVSSLVLARKHETCCSQSDRFYRLANECAQVLSEIVMCGGCYYVKPGGTSSGDATTAFANSVFNICQAVSANVCALMSCNGNKIEDLSIRALQKRLYSHVYRSDKVDSTFVTEYYEFLNKHFSMMILSDDGVVCYNSDYASKGYIANISAFQQVLYYQNNVFMSESKCWVEHDINNGPHEFCSQHTMLVKMDGDDVYLPYPNPSRILGAGCFVDDLLKTDSVLLIERFVSLAIDAYPLVYHENEEYQKVFRVYLAYIKKLYNDLGNQILDSYSVILSTCDGQKFTDESFYKNMYLRSAVMQSVGACVVCSSQTSLRCGSCIRKPLLCCKCCYDHVMATDHKYVLSVSPYVCNAPGCDVNDVTKLYLGGMSYYCEDHKPQYSFKLVMNGLVFGLYKQSCTGSPYIDDFNRIASCKWTDVDDYILANECTERLKLFAAETQKATEEAFKQSYASATIQEIVSERELILSWEIGKVKPPLNKNYVFTGYHFTKNGKTVLGEYVFDKSELTNGVYYRATTTYKLSVGDVFVLTSHSVANLSAPTLVPQENYSSIRFASVYSVLETFQNNVVNYQHIGMKRYCTVQGPPGTGKSHLAIGLAVFYCTARVVYTAASHAAVDALCEKAYKFLNINDCTRIVPAKVRVECYDKFKINDTTRKYVFTTINALPEMVTDIVVVDEVSMLTNYELSVINARIRAKHYVYIGDPAQLPAPRVLLSKGTLEPKYFNTVTKLMCCLGPDIFLGTCYRCPKEIVDTVSALVYENKLKAKNESSLLCFKVYYKGVTTHESSSAVNMQQIYLINKFLKANPLWHKAVFISPYNSQNFAAKRVLGLQTQTVDSAQGSEYDYVIYSQTAETAHSVNVNRFNVAITRAKKGILCVMSNMQLFEALQFTTLTLDKVPQAVETKVQCSTNLFKDCSKSYSGYHPAHAPSFLAVDDKYKATGDLAVCLGIGDSAVTYSRLISLMGFKLDVTLDGYCKLFITKEEAVKRVRAWVGFDAEGAHATLDSIGTNFPLQLGFSTGIDFVVEATGLFADRDGYSFKKAVAKAPPGEQFKHLIPLMTRGHRWDVVRPRIVQMFADHLIDLSDCVVLVTWAANFELTCLRYFAKVGREISCNVCTKRATVYNSRTGYYGCWRHSVTCDYLYNPLIVDIQQWGYIGSLSSNHDLYCSVHKGAHVASSDAIMTRCLAVYDCFCNNINWNVEYPIISNELSINTSCRVLQRVILKAAMLCNRYTLCYDIGNPKGIACVKDFDFKFYDAQPIVKSVKTLLYSFEAHKDSFKDGLCMFWNCNVDKYPPNAVVCRFDTRVLNNLNLPGCNGGSLYVNKHAFHTKPFARAAFEHLKPMPFFYYSDTPCVYMDGMDAKQVDYVPLKSATCITRCNLGGAVCLKHAEEYREYLESYNTATTAGFTFWVYKTFDFYNLWNTFTKLQSLENVVYNLVKTGHYTGQAGEMPCAIINDKVVTKIDKEDVVIFINNTTYPTNVAVELFAKRSVRHHPELKLFRNLNIDVCWKHVIWDYARESIFCSNTYGVCMYTDLKFIDKLNVLFDGRDNGAFEAFKRSNNGVYISTTKVKSLSMIRGPPRAELNGVVVDKVGDTDCVFYFAVRKEGQDVIFSQFDSLGVSSNQSPQGNLGSNGKPGNVGGNDALSISTIFTQSRVISSFTCRTDMEKDFIALDQDVFIQKYGLEDYAFEHIVYGNFNQKIIGGLHLLIGLYRRQQTSNLVVQEFVSYDSSIHSYFITDEKSGGSKSVCTVIDILLDDFVTLVKSLNLNCVSKVVNVNVDFKDFQFMLWCNDEKVMTFYPRLQAASDWKPGYSMPVLYKYLNSPMERVSLWNYGKPVTLPTGCMMNVAKYTQLCQYLNTTTLAVPVNMRVLHLGAGSEKGVAPGSAVLRQWLPAGTILVDNDLYPFVSDSVATYFGDCITLPFDCQWDLIISDMYDPITKNIGEYNVSKDGFFTYICHMIRDKLALGGSVAIKITEFSWNAELYKLMGYFAFWTVFCTNANASSSEGFLIGINYLCKPKVEIDGNVMHANYLFWRNSTVWNGGAYSLFDMAKFPLKLAGTAVINLRADQINDMVYSLLEKGKLLIRDTNKEVFVGDSLVNVI</sequence>
<keyword id="KW-0002">3D-structure</keyword>
<keyword id="KW-1072">Activation of host autophagy by virus</keyword>
<keyword id="KW-0067">ATP-binding</keyword>
<keyword id="KW-1132">Decay of host mRNAs by virus</keyword>
<keyword id="KW-1015">Disulfide bond</keyword>
<keyword id="KW-0255">Endonuclease</keyword>
<keyword id="KW-1262">Eukaryotic host gene expression shutoff by virus</keyword>
<keyword id="KW-1193">Eukaryotic host translation shutoff by virus</keyword>
<keyword id="KW-0269">Exonuclease</keyword>
<keyword id="KW-0347">Helicase</keyword>
<keyword id="KW-1035">Host cytoplasm</keyword>
<keyword id="KW-1190">Host gene expression shutoff by virus</keyword>
<keyword id="KW-1043">Host membrane</keyword>
<keyword id="KW-1192">Host mRNA suppression by virus</keyword>
<keyword id="KW-0945">Host-virus interaction</keyword>
<keyword id="KW-0378">Hydrolase</keyword>
<keyword id="KW-1090">Inhibition of host innate immune response by virus</keyword>
<keyword id="KW-1114">Inhibition of host interferon signaling pathway by virus</keyword>
<keyword id="KW-1095">Inhibition of host ISG15 by virus</keyword>
<keyword id="KW-1100">Inhibition of host NF-kappa-B by virus</keyword>
<keyword id="KW-0922">Interferon antiviral system evasion</keyword>
<keyword id="KW-0456">Lyase</keyword>
<keyword id="KW-0464">Manganese</keyword>
<keyword id="KW-0472">Membrane</keyword>
<keyword id="KW-0479">Metal-binding</keyword>
<keyword id="KW-0489">Methyltransferase</keyword>
<keyword id="KW-1127">Modulation of host ubiquitin pathway by viral deubiquitinase</keyword>
<keyword id="KW-1130">Modulation of host ubiquitin pathway by virus</keyword>
<keyword id="KW-0540">Nuclease</keyword>
<keyword id="KW-0547">Nucleotide-binding</keyword>
<keyword id="KW-0548">Nucleotidyltransferase</keyword>
<keyword id="KW-0645">Protease</keyword>
<keyword id="KW-1185">Reference proteome</keyword>
<keyword id="KW-0677">Repeat</keyword>
<keyword id="KW-0688">Ribosomal frameshifting</keyword>
<keyword id="KW-0694">RNA-binding</keyword>
<keyword id="KW-0696">RNA-directed RNA polymerase</keyword>
<keyword id="KW-0788">Thiol protease</keyword>
<keyword id="KW-0808">Transferase</keyword>
<keyword id="KW-0812">Transmembrane</keyword>
<keyword id="KW-1133">Transmembrane helix</keyword>
<keyword id="KW-0833">Ubl conjugation pathway</keyword>
<keyword id="KW-0899">Viral immunoevasion</keyword>
<keyword id="KW-0693">Viral RNA replication</keyword>
<keyword id="KW-0862">Zinc</keyword>
<keyword id="KW-0863">Zinc-finger</keyword>
<feature type="chain" id="PRO_0000283826" description="Host translation inhibitor nsp1" evidence="2">
    <location>
        <begin position="1"/>
        <end position="246"/>
    </location>
</feature>
<feature type="chain" id="PRO_0000283827" description="Non-structural protein 2" evidence="2">
    <location>
        <begin position="247"/>
        <end position="851"/>
    </location>
</feature>
<feature type="chain" id="PRO_0000283828" description="Papain-like proteinase nsp3" evidence="2">
    <location>
        <begin position="852"/>
        <end position="2750"/>
    </location>
</feature>
<feature type="chain" id="PRO_0000283829" description="Non-structural protein 4" evidence="2">
    <location>
        <begin position="2751"/>
        <end position="3246"/>
    </location>
</feature>
<feature type="chain" id="PRO_0000283830" description="3C-like proteinase nsp5" evidence="2">
    <location>
        <begin position="3247"/>
        <end position="3549"/>
    </location>
</feature>
<feature type="chain" id="PRO_0000283831" description="Non-structural protein 6" evidence="2">
    <location>
        <begin position="3550"/>
        <end position="3836"/>
    </location>
</feature>
<feature type="chain" id="PRO_0000283832" description="Non-structural protein 7" evidence="2">
    <location>
        <begin position="3837"/>
        <end position="3925"/>
    </location>
</feature>
<feature type="chain" id="PRO_0000283833" description="Non-structural protein 8" evidence="2">
    <location>
        <begin position="3926"/>
        <end position="4122"/>
    </location>
</feature>
<feature type="chain" id="PRO_0000283834" description="Viral protein genome-linked nsp9" evidence="2">
    <location>
        <begin position="4123"/>
        <end position="4232"/>
    </location>
</feature>
<feature type="chain" id="PRO_0000283835" description="Non-structural protein 10" evidence="2">
    <location>
        <begin position="4233"/>
        <end position="4369"/>
    </location>
</feature>
<feature type="chain" id="PRO_0000037308" description="RNA-directed RNA polymerase nsp12" evidence="2">
    <location>
        <begin position="4370"/>
        <end position="5297"/>
    </location>
</feature>
<feature type="chain" id="PRO_0000283836" description="Helicase nsp13" evidence="2">
    <location>
        <begin position="5298"/>
        <end position="5900"/>
    </location>
</feature>
<feature type="chain" id="PRO_0000283837" description="Guanine-N7 methyltransferase nsp14" evidence="2">
    <location>
        <begin position="5901"/>
        <end position="6421"/>
    </location>
</feature>
<feature type="chain" id="PRO_0000283838" description="Uridylate-specific endoribonuclease nsp15" evidence="2">
    <location>
        <begin position="6422"/>
        <end position="6796"/>
    </location>
</feature>
<feature type="chain" id="PRO_0000283839" description="2'-O-methyltransferase nsp16" evidence="2">
    <location>
        <begin position="6797"/>
        <end position="7095"/>
    </location>
</feature>
<feature type="transmembrane region" description="Helical" evidence="4">
    <location>
        <begin position="2138"/>
        <end position="2158"/>
    </location>
</feature>
<feature type="transmembrane region" description="Helical" evidence="4">
    <location>
        <begin position="2199"/>
        <end position="2219"/>
    </location>
</feature>
<feature type="transmembrane region" description="Helical" evidence="4">
    <location>
        <begin position="2221"/>
        <end position="2241"/>
    </location>
</feature>
<feature type="transmembrane region" description="Helical" evidence="4">
    <location>
        <begin position="2313"/>
        <end position="2333"/>
    </location>
</feature>
<feature type="transmembrane region" description="Helical" evidence="4">
    <location>
        <begin position="2343"/>
        <end position="2363"/>
    </location>
</feature>
<feature type="transmembrane region" description="Helical" evidence="4">
    <location>
        <begin position="2365"/>
        <end position="2385"/>
    </location>
</feature>
<feature type="transmembrane region" description="Helical" evidence="4">
    <location>
        <begin position="2752"/>
        <end position="2772"/>
    </location>
</feature>
<feature type="transmembrane region" description="Helical" evidence="4">
    <location>
        <begin position="2824"/>
        <end position="2844"/>
    </location>
</feature>
<feature type="transmembrane region" description="Helical" evidence="4">
    <location>
        <begin position="3009"/>
        <end position="3029"/>
    </location>
</feature>
<feature type="transmembrane region" description="Helical" evidence="4">
    <location>
        <begin position="3031"/>
        <end position="3051"/>
    </location>
</feature>
<feature type="transmembrane region" description="Helical" evidence="4">
    <location>
        <begin position="3063"/>
        <end position="3083"/>
    </location>
</feature>
<feature type="transmembrane region" description="Helical" evidence="4">
    <location>
        <begin position="3090"/>
        <end position="3110"/>
    </location>
</feature>
<feature type="transmembrane region" description="Helical" evidence="4">
    <location>
        <begin position="3115"/>
        <end position="3135"/>
    </location>
</feature>
<feature type="transmembrane region" description="Helical" evidence="4">
    <location>
        <begin position="3558"/>
        <end position="3578"/>
    </location>
</feature>
<feature type="transmembrane region" description="Helical" evidence="4">
    <location>
        <begin position="3588"/>
        <end position="3608"/>
    </location>
</feature>
<feature type="transmembrane region" description="Helical" evidence="4">
    <location>
        <begin position="3615"/>
        <end position="3635"/>
    </location>
</feature>
<feature type="transmembrane region" description="Helical" evidence="4">
    <location>
        <begin position="3657"/>
        <end position="3677"/>
    </location>
</feature>
<feature type="transmembrane region" description="Helical" evidence="4">
    <location>
        <begin position="3684"/>
        <end position="3704"/>
    </location>
</feature>
<feature type="transmembrane region" description="Helical" evidence="4">
    <location>
        <begin position="3711"/>
        <end position="3731"/>
    </location>
</feature>
<feature type="transmembrane region" description="Helical" evidence="4">
    <location>
        <begin position="3755"/>
        <end position="3775"/>
    </location>
</feature>
<feature type="domain" description="CoV Nsp1 globular" evidence="26">
    <location>
        <begin position="54"/>
        <end position="196"/>
    </location>
</feature>
<feature type="domain" description="BetaCoV Nsp1 C-terminal" evidence="27">
    <location>
        <begin position="216"/>
        <end position="246"/>
    </location>
</feature>
<feature type="domain" description="CoV Nsp2 N-terminal" evidence="28">
    <location>
        <begin position="250"/>
        <end position="514"/>
    </location>
</feature>
<feature type="domain" description="CoV Nsp2 middle" evidence="29">
    <location>
        <begin position="524"/>
        <end position="713"/>
    </location>
</feature>
<feature type="domain" description="CoV Nsp2 C-terminal" evidence="30">
    <location>
        <begin position="733"/>
        <end position="851"/>
    </location>
</feature>
<feature type="domain" description="Ubiquitin-like 1" evidence="5">
    <location>
        <begin position="853"/>
        <end position="966"/>
    </location>
</feature>
<feature type="domain" description="Peptidase C16 1" evidence="6">
    <location>
        <begin position="1036"/>
        <end position="1274"/>
    </location>
</feature>
<feature type="domain" description="Macro" evidence="7">
    <location>
        <begin position="1275"/>
        <end position="1435"/>
    </location>
</feature>
<feature type="domain" description="DPUP" evidence="11">
    <location>
        <begin position="1491"/>
        <end position="1563"/>
    </location>
</feature>
<feature type="domain" description="Ubiquitin-like 2" evidence="5">
    <location>
        <begin position="1562"/>
        <end position="1617"/>
    </location>
</feature>
<feature type="domain" description="Peptidase C16 2" evidence="6">
    <location>
        <begin position="1631"/>
        <end position="1892"/>
    </location>
</feature>
<feature type="domain" description="Nucleic acid-binding" evidence="12">
    <location>
        <begin position="1906"/>
        <end position="2007"/>
    </location>
</feature>
<feature type="domain" description="G2M" evidence="33">
    <location>
        <begin position="2020"/>
        <end position="2169"/>
    </location>
</feature>
<feature type="domain" description="3Ecto" evidence="32">
    <location>
        <begin position="2235"/>
        <end position="2296"/>
    </location>
</feature>
<feature type="domain" description="CoV Nsp3 Y" evidence="31">
    <location>
        <begin position="2383"/>
        <end position="2750"/>
    </location>
</feature>
<feature type="domain" description="Nsp4C" evidence="13">
    <location>
        <begin position="3149"/>
        <end position="3246"/>
    </location>
</feature>
<feature type="domain" description="Peptidase C30" evidence="9">
    <location>
        <begin position="3247"/>
        <end position="3549"/>
    </location>
</feature>
<feature type="domain" description="RdRp Nsp7 cofactor" evidence="16">
    <location>
        <begin position="3837"/>
        <end position="3925"/>
    </location>
</feature>
<feature type="domain" description="RdRp Nsp8 cofactor" evidence="17">
    <location>
        <begin position="3926"/>
        <end position="4122"/>
    </location>
</feature>
<feature type="domain" description="Nsp9 ssRNA-binding" evidence="18">
    <location>
        <begin position="4123"/>
        <end position="4232"/>
    </location>
</feature>
<feature type="domain" description="ExoN/MTase coactivator" evidence="19">
    <location>
        <begin position="4233"/>
        <end position="4370"/>
    </location>
</feature>
<feature type="domain" description="NiRAN" evidence="14">
    <location>
        <begin position="4375"/>
        <end position="4630"/>
    </location>
</feature>
<feature type="domain" description="Nsp12 Interface" evidence="34">
    <location>
        <begin position="4631"/>
        <end position="4729"/>
    </location>
</feature>
<feature type="domain" description="Nsp12 RNA-dependent RNA polymerase" evidence="15">
    <location>
        <begin position="4730"/>
        <end position="5297"/>
    </location>
</feature>
<feature type="domain" description="RdRp catalytic" evidence="8">
    <location>
        <begin position="4977"/>
        <end position="5139"/>
    </location>
</feature>
<feature type="domain" description="CV ZBD" evidence="10">
    <location>
        <begin position="5298"/>
        <end position="5410"/>
    </location>
</feature>
<feature type="domain" description="(+)RNA virus helicase ATP-binding">
    <location>
        <begin position="5553"/>
        <end position="5734"/>
    </location>
</feature>
<feature type="domain" description="(+)RNA virus helicase C-terminal">
    <location>
        <begin position="5735"/>
        <end position="5904"/>
    </location>
</feature>
<feature type="domain" description="ExoN" evidence="20">
    <location>
        <begin position="5971"/>
        <end position="6186"/>
    </location>
</feature>
<feature type="domain" description="N7-MTase" evidence="21">
    <location>
        <begin position="6195"/>
        <end position="6421"/>
    </location>
</feature>
<feature type="domain" description="Nsp15 N-terminal oligomerization" evidence="24">
    <location>
        <begin position="6422"/>
        <end position="6482"/>
    </location>
</feature>
<feature type="domain" description="AV-Nsp11N/CoV-Nsp15M" evidence="25">
    <location>
        <begin position="6483"/>
        <end position="6603"/>
    </location>
</feature>
<feature type="domain" description="NendoU" evidence="23">
    <location>
        <begin position="6654"/>
        <end position="6793"/>
    </location>
</feature>
<feature type="domain" description="Nidovirus-type SAM-dependent 2'-O-MTase" evidence="22">
    <location>
        <begin position="6798"/>
        <end position="7092"/>
    </location>
</feature>
<feature type="zinc finger region" description="C4-type 1" evidence="6">
    <location>
        <begin position="1151"/>
        <end position="1179"/>
    </location>
</feature>
<feature type="zinc finger region" description="C4-type 2" evidence="6">
    <location>
        <begin position="1749"/>
        <end position="1785"/>
    </location>
</feature>
<feature type="zinc finger region" evidence="1">
    <location>
        <begin position="4306"/>
        <end position="4322"/>
    </location>
</feature>
<feature type="zinc finger region" evidence="1">
    <location>
        <begin position="4348"/>
        <end position="4361"/>
    </location>
</feature>
<feature type="region of interest" description="C4" evidence="28">
    <location>
        <begin position="392"/>
        <end position="416"/>
    </location>
</feature>
<feature type="region of interest" description="Disordered" evidence="35">
    <location>
        <begin position="995"/>
        <end position="1025"/>
    </location>
</feature>
<feature type="region of interest" description="HD1" evidence="1">
    <location>
        <begin position="2138"/>
        <end position="2385"/>
    </location>
</feature>
<feature type="region of interest" description="Y1" evidence="31">
    <location>
        <begin position="2383"/>
        <end position="2473"/>
    </location>
</feature>
<feature type="region of interest" description="ZF1" evidence="31">
    <location>
        <begin position="2387"/>
        <end position="2400"/>
    </location>
</feature>
<feature type="region of interest" description="ZF2" evidence="31">
    <location>
        <begin position="2433"/>
        <end position="2443"/>
    </location>
</feature>
<feature type="region of interest" description="CoV-Y" evidence="31">
    <location>
        <begin position="2474"/>
        <end position="2750"/>
    </location>
</feature>
<feature type="region of interest" description="Y2" evidence="31">
    <location>
        <begin position="2474"/>
        <end position="2566"/>
    </location>
</feature>
<feature type="region of interest" description="Y3" evidence="31">
    <location>
        <begin position="2567"/>
        <end position="2649"/>
    </location>
</feature>
<feature type="region of interest" description="Y4" evidence="31">
    <location>
        <begin position="2650"/>
        <end position="2750"/>
    </location>
</feature>
<feature type="region of interest" description="HD2" evidence="1">
    <location>
        <begin position="2752"/>
        <end position="3135"/>
    </location>
</feature>
<feature type="region of interest" description="HD3" evidence="1">
    <location>
        <begin position="3319"/>
        <end position="3775"/>
    </location>
</feature>
<feature type="region of interest" description="RdRp Fingers N-ter" evidence="15">
    <location>
        <begin position="4732"/>
        <end position="4946"/>
    </location>
</feature>
<feature type="region of interest" description="RdRp Palm N-ter" evidence="15">
    <location>
        <begin position="4947"/>
        <end position="4985"/>
    </location>
</feature>
<feature type="region of interest" description="RdRp Fingers C-ter" evidence="15">
    <location>
        <begin position="4986"/>
        <end position="5044"/>
    </location>
</feature>
<feature type="region of interest" description="RdRp Palm C-ter" evidence="15">
    <location>
        <begin position="5045"/>
        <end position="5180"/>
    </location>
</feature>
<feature type="region of interest" description="RdRp Thumb" evidence="15">
    <location>
        <begin position="5181"/>
        <end position="5297"/>
    </location>
</feature>
<feature type="region of interest" description="GpppA-binding" evidence="21">
    <location>
        <begin position="6308"/>
        <end position="6322"/>
    </location>
</feature>
<feature type="compositionally biased region" description="Acidic residues" evidence="35">
    <location>
        <begin position="1000"/>
        <end position="1013"/>
    </location>
</feature>
<feature type="active site" description="For PL1-PRO activity" evidence="6">
    <location>
        <position position="1074"/>
    </location>
</feature>
<feature type="active site" description="For PL1-PRO activity" evidence="6">
    <location>
        <position position="1225"/>
    </location>
</feature>
<feature type="active site" description="For PL1-PRO activity" evidence="6">
    <location>
        <position position="1236"/>
    </location>
</feature>
<feature type="active site" description="For PL2-PRO activity" evidence="6">
    <location>
        <position position="1671"/>
    </location>
</feature>
<feature type="active site" description="For PL2-PRO activity" evidence="6">
    <location>
        <position position="1828"/>
    </location>
</feature>
<feature type="active site" description="For PL2-PRO activity" evidence="6">
    <location>
        <position position="1842"/>
    </location>
</feature>
<feature type="active site" description="For 3CL-PRO activity" evidence="9">
    <location>
        <position position="3287"/>
    </location>
</feature>
<feature type="active site" description="For 3CL-PRO activity" evidence="9">
    <location>
        <position position="3391"/>
    </location>
</feature>
<feature type="active site" evidence="15">
    <location>
        <position position="5124"/>
    </location>
</feature>
<feature type="active site" evidence="15">
    <location>
        <position position="5125"/>
    </location>
</feature>
<feature type="active site" evidence="15">
    <location>
        <position position="5126"/>
    </location>
</feature>
<feature type="active site" evidence="20">
    <location>
        <position position="5989"/>
    </location>
</feature>
<feature type="active site" evidence="20">
    <location>
        <position position="5991"/>
    </location>
</feature>
<feature type="active site" evidence="20">
    <location>
        <position position="6090"/>
    </location>
</feature>
<feature type="active site" evidence="20">
    <location>
        <position position="6167"/>
    </location>
</feature>
<feature type="active site" evidence="20">
    <location>
        <position position="6172"/>
    </location>
</feature>
<feature type="active site" evidence="23">
    <location>
        <position position="6684"/>
    </location>
</feature>
<feature type="active site" evidence="23">
    <location>
        <position position="6699"/>
    </location>
</feature>
<feature type="active site" evidence="23">
    <location>
        <position position="6739"/>
    </location>
</feature>
<feature type="active site" evidence="22">
    <location>
        <position position="6842"/>
    </location>
</feature>
<feature type="active site" evidence="22">
    <location>
        <position position="6926"/>
    </location>
</feature>
<feature type="active site" evidence="22">
    <location>
        <position position="6966"/>
    </location>
</feature>
<feature type="active site" evidence="22">
    <location>
        <position position="6999"/>
    </location>
</feature>
<feature type="binding site" evidence="28">
    <location>
        <position position="392"/>
    </location>
    <ligand>
        <name>Zn(2+)</name>
        <dbReference type="ChEBI" id="CHEBI:29105"/>
        <label>1</label>
    </ligand>
</feature>
<feature type="binding site" evidence="28">
    <location>
        <position position="397"/>
    </location>
    <ligand>
        <name>Zn(2+)</name>
        <dbReference type="ChEBI" id="CHEBI:29105"/>
        <label>1</label>
    </ligand>
</feature>
<feature type="binding site" evidence="28">
    <location>
        <position position="413"/>
    </location>
    <ligand>
        <name>Zn(2+)</name>
        <dbReference type="ChEBI" id="CHEBI:29105"/>
        <label>1</label>
    </ligand>
</feature>
<feature type="binding site" evidence="28">
    <location>
        <position position="416"/>
    </location>
    <ligand>
        <name>Zn(2+)</name>
        <dbReference type="ChEBI" id="CHEBI:29105"/>
        <label>1</label>
    </ligand>
</feature>
<feature type="binding site" evidence="6">
    <location>
        <position position="1151"/>
    </location>
    <ligand>
        <name>Zn(2+)</name>
        <dbReference type="ChEBI" id="CHEBI:29105"/>
        <label>2</label>
    </ligand>
</feature>
<feature type="binding site" evidence="6">
    <location>
        <position position="1154"/>
    </location>
    <ligand>
        <name>Zn(2+)</name>
        <dbReference type="ChEBI" id="CHEBI:29105"/>
        <label>2</label>
    </ligand>
</feature>
<feature type="binding site" evidence="6">
    <location>
        <position position="1177"/>
    </location>
    <ligand>
        <name>Zn(2+)</name>
        <dbReference type="ChEBI" id="CHEBI:29105"/>
        <label>2</label>
    </ligand>
</feature>
<feature type="binding site" evidence="6">
    <location>
        <position position="1179"/>
    </location>
    <ligand>
        <name>Zn(2+)</name>
        <dbReference type="ChEBI" id="CHEBI:29105"/>
        <label>2</label>
    </ligand>
</feature>
<feature type="binding site" evidence="6">
    <location>
        <position position="1749"/>
    </location>
    <ligand>
        <name>Zn(2+)</name>
        <dbReference type="ChEBI" id="CHEBI:29105"/>
        <label>3</label>
    </ligand>
</feature>
<feature type="binding site" evidence="6">
    <location>
        <position position="1751"/>
    </location>
    <ligand>
        <name>Zn(2+)</name>
        <dbReference type="ChEBI" id="CHEBI:29105"/>
        <label>3</label>
    </ligand>
</feature>
<feature type="binding site" evidence="6">
    <location>
        <position position="1783"/>
    </location>
    <ligand>
        <name>Zn(2+)</name>
        <dbReference type="ChEBI" id="CHEBI:29105"/>
        <label>3</label>
    </ligand>
</feature>
<feature type="binding site" evidence="6">
    <location>
        <position position="1785"/>
    </location>
    <ligand>
        <name>Zn(2+)</name>
        <dbReference type="ChEBI" id="CHEBI:29105"/>
        <label>3</label>
    </ligand>
</feature>
<feature type="binding site" evidence="31">
    <location>
        <position position="2387"/>
    </location>
    <ligand>
        <name>Zn(2+)</name>
        <dbReference type="ChEBI" id="CHEBI:29105"/>
        <label>4</label>
    </ligand>
</feature>
<feature type="binding site" evidence="31">
    <location>
        <position position="2392"/>
    </location>
    <ligand>
        <name>Zn(2+)</name>
        <dbReference type="ChEBI" id="CHEBI:29105"/>
        <label>4</label>
    </ligand>
</feature>
<feature type="binding site" evidence="31">
    <location>
        <position position="2397"/>
    </location>
    <ligand>
        <name>Zn(2+)</name>
        <dbReference type="ChEBI" id="CHEBI:29105"/>
        <label>4</label>
    </ligand>
</feature>
<feature type="binding site" evidence="31">
    <location>
        <position position="2400"/>
    </location>
    <ligand>
        <name>Zn(2+)</name>
        <dbReference type="ChEBI" id="CHEBI:29105"/>
        <label>4</label>
    </ligand>
</feature>
<feature type="binding site" evidence="31">
    <location>
        <position position="2433"/>
    </location>
    <ligand>
        <name>Zn(2+)</name>
        <dbReference type="ChEBI" id="CHEBI:29105"/>
        <label>5</label>
    </ligand>
</feature>
<feature type="binding site" evidence="31">
    <location>
        <position position="2436"/>
    </location>
    <ligand>
        <name>Zn(2+)</name>
        <dbReference type="ChEBI" id="CHEBI:29105"/>
        <label>5</label>
    </ligand>
</feature>
<feature type="binding site" evidence="31">
    <location>
        <position position="2440"/>
    </location>
    <ligand>
        <name>Zn(2+)</name>
        <dbReference type="ChEBI" id="CHEBI:29105"/>
        <label>5</label>
    </ligand>
</feature>
<feature type="binding site" evidence="31">
    <location>
        <position position="2443"/>
    </location>
    <ligand>
        <name>Zn(2+)</name>
        <dbReference type="ChEBI" id="CHEBI:29105"/>
        <label>5</label>
    </ligand>
</feature>
<feature type="binding site" evidence="19">
    <location>
        <position position="4306"/>
    </location>
    <ligand>
        <name>Zn(2+)</name>
        <dbReference type="ChEBI" id="CHEBI:29105"/>
        <label>6</label>
    </ligand>
</feature>
<feature type="binding site" evidence="19">
    <location>
        <position position="4309"/>
    </location>
    <ligand>
        <name>Zn(2+)</name>
        <dbReference type="ChEBI" id="CHEBI:29105"/>
        <label>6</label>
    </ligand>
</feature>
<feature type="binding site" evidence="19">
    <location>
        <position position="4315"/>
    </location>
    <ligand>
        <name>Zn(2+)</name>
        <dbReference type="ChEBI" id="CHEBI:29105"/>
        <label>6</label>
    </ligand>
</feature>
<feature type="binding site" evidence="19">
    <location>
        <position position="4322"/>
    </location>
    <ligand>
        <name>Zn(2+)</name>
        <dbReference type="ChEBI" id="CHEBI:29105"/>
        <label>6</label>
    </ligand>
</feature>
<feature type="binding site" evidence="19">
    <location>
        <position position="4348"/>
    </location>
    <ligand>
        <name>Zn(2+)</name>
        <dbReference type="ChEBI" id="CHEBI:29105"/>
        <label>7</label>
    </ligand>
</feature>
<feature type="binding site" evidence="19">
    <location>
        <position position="4351"/>
    </location>
    <ligand>
        <name>Zn(2+)</name>
        <dbReference type="ChEBI" id="CHEBI:29105"/>
        <label>7</label>
    </ligand>
</feature>
<feature type="binding site" evidence="19">
    <location>
        <position position="4359"/>
    </location>
    <ligand>
        <name>Zn(2+)</name>
        <dbReference type="ChEBI" id="CHEBI:29105"/>
        <label>7</label>
    </ligand>
</feature>
<feature type="binding site" evidence="19">
    <location>
        <position position="4361"/>
    </location>
    <ligand>
        <name>Zn(2+)</name>
        <dbReference type="ChEBI" id="CHEBI:29105"/>
        <label>7</label>
    </ligand>
</feature>
<feature type="binding site" evidence="3">
    <location>
        <position position="4578"/>
    </location>
    <ligand>
        <name>Mn(2+)</name>
        <dbReference type="ChEBI" id="CHEBI:29035"/>
    </ligand>
</feature>
<feature type="binding site" evidence="3">
    <location>
        <position position="4587"/>
    </location>
    <ligand>
        <name>Mn(2+)</name>
        <dbReference type="ChEBI" id="CHEBI:29035"/>
    </ligand>
</feature>
<feature type="binding site" evidence="34">
    <location>
        <position position="4660"/>
    </location>
    <ligand>
        <name>Zn(2+)</name>
        <dbReference type="ChEBI" id="CHEBI:29105"/>
        <label>8</label>
    </ligand>
</feature>
<feature type="binding site" evidence="34">
    <location>
        <position position="4666"/>
    </location>
    <ligand>
        <name>Zn(2+)</name>
        <dbReference type="ChEBI" id="CHEBI:29105"/>
        <label>8</label>
    </ligand>
</feature>
<feature type="binding site" evidence="34">
    <location>
        <position position="4671"/>
    </location>
    <ligand>
        <name>Zn(2+)</name>
        <dbReference type="ChEBI" id="CHEBI:29105"/>
        <label>8</label>
    </ligand>
</feature>
<feature type="binding site" evidence="34">
    <location>
        <position position="4675"/>
    </location>
    <ligand>
        <name>Zn(2+)</name>
        <dbReference type="ChEBI" id="CHEBI:29105"/>
        <label>8</label>
    </ligand>
</feature>
<feature type="binding site" evidence="15">
    <location>
        <position position="4852"/>
    </location>
    <ligand>
        <name>Zn(2+)</name>
        <dbReference type="ChEBI" id="CHEBI:29105"/>
        <label>9</label>
    </ligand>
</feature>
<feature type="binding site" evidence="15">
    <location>
        <position position="5007"/>
    </location>
    <ligand>
        <name>Zn(2+)</name>
        <dbReference type="ChEBI" id="CHEBI:29105"/>
        <label>9</label>
    </ligand>
</feature>
<feature type="binding site" evidence="15">
    <location>
        <position position="5010"/>
    </location>
    <ligand>
        <name>Zn(2+)</name>
        <dbReference type="ChEBI" id="CHEBI:29105"/>
        <label>9</label>
    </ligand>
</feature>
<feature type="binding site" evidence="15">
    <location>
        <position position="5011"/>
    </location>
    <ligand>
        <name>Zn(2+)</name>
        <dbReference type="ChEBI" id="CHEBI:29105"/>
        <label>9</label>
    </ligand>
</feature>
<feature type="binding site" evidence="10">
    <location>
        <position position="5302"/>
    </location>
    <ligand>
        <name>Zn(2+)</name>
        <dbReference type="ChEBI" id="CHEBI:29105"/>
        <label>10</label>
    </ligand>
</feature>
<feature type="binding site" evidence="10">
    <location>
        <position position="5305"/>
    </location>
    <ligand>
        <name>Zn(2+)</name>
        <dbReference type="ChEBI" id="CHEBI:29105"/>
        <label>10</label>
    </ligand>
</feature>
<feature type="binding site" evidence="10">
    <location>
        <position position="5313"/>
    </location>
    <ligand>
        <name>Zn(2+)</name>
        <dbReference type="ChEBI" id="CHEBI:29105"/>
        <label>11</label>
    </ligand>
</feature>
<feature type="binding site" evidence="10">
    <location>
        <position position="5316"/>
    </location>
    <ligand>
        <name>Zn(2+)</name>
        <dbReference type="ChEBI" id="CHEBI:29105"/>
        <label>11</label>
    </ligand>
</feature>
<feature type="binding site" evidence="10">
    <location>
        <position position="5323"/>
    </location>
    <ligand>
        <name>Zn(2+)</name>
        <dbReference type="ChEBI" id="CHEBI:29105"/>
        <label>10</label>
    </ligand>
</feature>
<feature type="binding site" evidence="10">
    <location>
        <position position="5326"/>
    </location>
    <ligand>
        <name>Zn(2+)</name>
        <dbReference type="ChEBI" id="CHEBI:29105"/>
        <label>10</label>
    </ligand>
</feature>
<feature type="binding site" evidence="10">
    <location>
        <position position="5330"/>
    </location>
    <ligand>
        <name>Zn(2+)</name>
        <dbReference type="ChEBI" id="CHEBI:29105"/>
        <label>11</label>
    </ligand>
</feature>
<feature type="binding site" evidence="10">
    <location>
        <position position="5336"/>
    </location>
    <ligand>
        <name>Zn(2+)</name>
        <dbReference type="ChEBI" id="CHEBI:29105"/>
        <label>11</label>
    </ligand>
</feature>
<feature type="binding site" evidence="10">
    <location>
        <position position="5347"/>
    </location>
    <ligand>
        <name>Zn(2+)</name>
        <dbReference type="ChEBI" id="CHEBI:29105"/>
        <label>12</label>
    </ligand>
</feature>
<feature type="binding site" evidence="10">
    <location>
        <position position="5352"/>
    </location>
    <ligand>
        <name>Zn(2+)</name>
        <dbReference type="ChEBI" id="CHEBI:29105"/>
        <label>12</label>
    </ligand>
</feature>
<feature type="binding site" evidence="10">
    <location>
        <position position="5369"/>
    </location>
    <ligand>
        <name>Zn(2+)</name>
        <dbReference type="ChEBI" id="CHEBI:29105"/>
        <label>12</label>
    </ligand>
</feature>
<feature type="binding site" evidence="10">
    <location>
        <position position="5372"/>
    </location>
    <ligand>
        <name>Zn(2+)</name>
        <dbReference type="ChEBI" id="CHEBI:29105"/>
        <label>12</label>
    </ligand>
</feature>
<feature type="binding site" evidence="1">
    <location>
        <begin position="5578"/>
        <end position="5585"/>
    </location>
    <ligand>
        <name>ATP</name>
        <dbReference type="ChEBI" id="CHEBI:30616"/>
    </ligand>
</feature>
<feature type="binding site" evidence="20">
    <location>
        <position position="6106"/>
    </location>
    <ligand>
        <name>Zn(2+)</name>
        <dbReference type="ChEBI" id="CHEBI:29105"/>
        <label>13</label>
    </ligand>
</feature>
<feature type="binding site" evidence="20">
    <location>
        <position position="6109"/>
    </location>
    <ligand>
        <name>Zn(2+)</name>
        <dbReference type="ChEBI" id="CHEBI:29105"/>
        <label>13</label>
    </ligand>
</feature>
<feature type="binding site" evidence="20">
    <location>
        <position position="6125"/>
    </location>
    <ligand>
        <name>Zn(2+)</name>
        <dbReference type="ChEBI" id="CHEBI:29105"/>
        <label>13</label>
    </ligand>
</feature>
<feature type="binding site" evidence="20">
    <location>
        <position position="6128"/>
    </location>
    <ligand>
        <name>Zn(2+)</name>
        <dbReference type="ChEBI" id="CHEBI:29105"/>
        <label>13</label>
    </ligand>
</feature>
<feature type="binding site" evidence="20">
    <location>
        <position position="6156"/>
    </location>
    <ligand>
        <name>Zn(2+)</name>
        <dbReference type="ChEBI" id="CHEBI:29105"/>
        <label>14</label>
    </ligand>
</feature>
<feature type="binding site" evidence="20">
    <location>
        <position position="6160"/>
    </location>
    <ligand>
        <name>Zn(2+)</name>
        <dbReference type="ChEBI" id="CHEBI:29105"/>
        <label>14</label>
    </ligand>
</feature>
<feature type="binding site" evidence="20">
    <location>
        <position position="6163"/>
    </location>
    <ligand>
        <name>Zn(2+)</name>
        <dbReference type="ChEBI" id="CHEBI:29105"/>
        <label>14</label>
    </ligand>
</feature>
<feature type="binding site" evidence="20">
    <location>
        <position position="6178"/>
    </location>
    <ligand>
        <name>Zn(2+)</name>
        <dbReference type="ChEBI" id="CHEBI:29105"/>
        <label>14</label>
    </ligand>
</feature>
<feature type="binding site" evidence="21">
    <location>
        <begin position="6230"/>
        <end position="6236"/>
    </location>
    <ligand>
        <name>S-adenosyl-L-methionine</name>
        <dbReference type="ChEBI" id="CHEBI:59789"/>
    </ligand>
</feature>
<feature type="binding site" evidence="21">
    <location>
        <position position="6346"/>
    </location>
    <ligand>
        <name>Zn(2+)</name>
        <dbReference type="ChEBI" id="CHEBI:29105"/>
        <label>15</label>
    </ligand>
</feature>
<feature type="binding site" evidence="21">
    <location>
        <position position="6367"/>
    </location>
    <ligand>
        <name>Zn(2+)</name>
        <dbReference type="ChEBI" id="CHEBI:29105"/>
        <label>15</label>
    </ligand>
</feature>
<feature type="binding site" evidence="21">
    <location>
        <position position="6378"/>
    </location>
    <ligand>
        <name>Zn(2+)</name>
        <dbReference type="ChEBI" id="CHEBI:29105"/>
        <label>15</label>
    </ligand>
</feature>
<feature type="binding site" evidence="21">
    <location>
        <position position="6381"/>
    </location>
    <ligand>
        <name>Zn(2+)</name>
        <dbReference type="ChEBI" id="CHEBI:29105"/>
        <label>15</label>
    </ligand>
</feature>
<feature type="site" description="Cleavage; by PL1-PRO" evidence="1">
    <location>
        <begin position="246"/>
        <end position="247"/>
    </location>
</feature>
<feature type="site" description="Cleavage; by PL1-PRO" evidence="1">
    <location>
        <begin position="851"/>
        <end position="852"/>
    </location>
</feature>
<feature type="site" description="Cleavage; by PL2-PRO" evidence="1">
    <location>
        <begin position="2750"/>
        <end position="2751"/>
    </location>
</feature>
<feature type="site" description="Cleavage; by 3CL-PRO" evidence="1">
    <location>
        <begin position="3246"/>
        <end position="3247"/>
    </location>
</feature>
<feature type="site" description="Cleavage; by 3CL-PRO" evidence="1">
    <location>
        <begin position="3549"/>
        <end position="3550"/>
    </location>
</feature>
<feature type="site" description="Cleavage; by 3CL-PRO" evidence="1">
    <location>
        <begin position="3836"/>
        <end position="3837"/>
    </location>
</feature>
<feature type="site" description="Cleavage; by 3CL-PRO" evidence="1">
    <location>
        <begin position="3925"/>
        <end position="3926"/>
    </location>
</feature>
<feature type="site" description="Cleavage; by 3CL-PRO" evidence="1">
    <location>
        <begin position="4122"/>
        <end position="4123"/>
    </location>
</feature>
<feature type="site" description="Cleavage; by 3CL-PRO" evidence="1">
    <location>
        <begin position="4232"/>
        <end position="4233"/>
    </location>
</feature>
<feature type="site" description="Cleavage; by 3CL-PRO" evidence="1">
    <location>
        <begin position="4369"/>
        <end position="4370"/>
    </location>
</feature>
<feature type="site" description="Cleavage; by 3CL-PRO" evidence="1">
    <location>
        <begin position="5297"/>
        <end position="5298"/>
    </location>
</feature>
<feature type="site" description="Cleavage; by 3CL-PRO" evidence="1">
    <location>
        <begin position="5900"/>
        <end position="5901"/>
    </location>
</feature>
<feature type="site" description="Cleavage; by 3CL-PRO" evidence="1">
    <location>
        <begin position="6421"/>
        <end position="6422"/>
    </location>
</feature>
<feature type="site" description="Cleavage; by 3CL-PRO" evidence="1">
    <location>
        <begin position="6796"/>
        <end position="6797"/>
    </location>
</feature>
<feature type="disulfide bond" evidence="32">
    <location>
        <begin position="2251"/>
        <end position="2275"/>
    </location>
</feature>
<feature type="disulfide bond" evidence="32">
    <location>
        <begin position="2266"/>
        <end position="2272"/>
    </location>
</feature>
<feature type="sequence variant" description="In strain: ATCC VR-759 and Isolate clinical OC43-Paris.">
    <original>H</original>
    <variation>D</variation>
    <location>
        <position position="88"/>
    </location>
</feature>
<feature type="sequence variant" description="In strain: ATCC VR-759 and Isolate clinical OC43-Paris.">
    <original>C</original>
    <variation>R</variation>
    <location>
        <position position="207"/>
    </location>
</feature>
<feature type="sequence variant" description="In strain: ATCC VR-759 and Isolate clinical OC43-Paris.">
    <original>P</original>
    <variation>L</variation>
    <location>
        <position position="291"/>
    </location>
</feature>
<feature type="sequence variant" description="In strain: ATCC VR-759 and Isolate clinical OC43-Paris.">
    <original>C</original>
    <variation>R</variation>
    <location>
        <position position="317"/>
    </location>
</feature>
<feature type="sequence variant" description="In strain: ATCC VR-759 and Isolate clinical OC43-Paris.">
    <original>F</original>
    <variation>V</variation>
    <location>
        <position position="356"/>
    </location>
</feature>
<feature type="sequence variant" description="In strain: ATCC VR-759 and Isolate clinical OC43-Paris.">
    <original>I</original>
    <variation>L</variation>
    <location>
        <position position="545"/>
    </location>
</feature>
<feature type="sequence variant" description="In strain: Isolate 87309 Belgium 2003.">
    <original>D</original>
    <variation>N</variation>
    <location>
        <position position="762"/>
    </location>
</feature>
<feature type="sequence variant" description="In strain: ATCC VR-759, Isolate clinical OC43-Paris and Isolate 87309 Belgium 2003.">
    <original>F</original>
    <variation>L</variation>
    <location>
        <position position="953"/>
    </location>
</feature>
<feature type="sequence variant" description="In strain: ATCC VR-759, Isolate clinical OC43-Paris and Isolate 87309 Belgium 2003.">
    <original>I</original>
    <variation>V</variation>
    <location>
        <position position="989"/>
    </location>
</feature>
<feature type="sequence variant" description="In strain: ATCC VR-759, Isolate clinical OC43-Paris and Isolate 87309 Belgium 2003.">
    <original>V</original>
    <variation>A</variation>
    <location>
        <position position="1305"/>
    </location>
</feature>
<feature type="sequence variant" description="In strain: ATCC VR-759 and Isolate clinical OC43-Paris.">
    <original>N</original>
    <variation>D</variation>
    <location>
        <position position="1328"/>
    </location>
</feature>
<feature type="sequence variant" description="In strain: ATCC VR-759 and Isolate clinical OC43-Paris.">
    <original>F</original>
    <variation>L</variation>
    <location>
        <position position="1379"/>
    </location>
</feature>
<feature type="sequence variant" description="In strain: ATCC VR-759 and Isolate clinical OC43-Paris.">
    <original>L</original>
    <variation>V</variation>
    <location>
        <position position="1504"/>
    </location>
</feature>
<feature type="sequence variant" description="In strain: Isolate 87309 Belgium 2003.">
    <original>G</original>
    <variation>E</variation>
    <location>
        <position position="1740"/>
    </location>
</feature>
<feature type="sequence variant" description="In strain: ATCC VR-759 and Isolate clinical OC43-Paris.">
    <original>N</original>
    <variation>K</variation>
    <location>
        <position position="1825"/>
    </location>
</feature>
<feature type="sequence variant" description="In strain: ATCC VR-759, Isolate clinical OC43-Paris and Isolate 87309 Belgium 2003.">
    <original>S</original>
    <variation>A</variation>
    <location>
        <position position="1936"/>
    </location>
</feature>
<feature type="sequence variant" description="In strain: ATCC VR-759, Isolate clinical OC43-Paris.">
    <original>N</original>
    <variation>T</variation>
    <location>
        <position position="1965"/>
    </location>
</feature>
<feature type="sequence variant" description="In strain: ATCC VR-759, Isolate clinical OC43-Paris and Isolate 87309 Belgium 2003.">
    <original>L</original>
    <variation>S</variation>
    <location>
        <position position="2004"/>
    </location>
</feature>
<feature type="sequence variant" description="In strain: ATCC VR-759 and Isolate clinical OC43-Paris.">
    <original>S</original>
    <variation>G</variation>
    <location>
        <position position="2022"/>
    </location>
</feature>
<feature type="sequence variant" description="In strain: ATCC VR-759 and Isolate clinical OC43-Paris.">
    <original>TSA</original>
    <variation>ISV</variation>
    <location>
        <begin position="2138"/>
        <end position="2140"/>
    </location>
</feature>
<feature type="sequence variant" description="In strain: ATCC VR-759 and Isolate clinical OC43-Paris.">
    <original>I</original>
    <variation>M</variation>
    <location>
        <position position="2256"/>
    </location>
</feature>
<feature type="sequence variant" description="In strain: Isolate 87309 Belgium 2003.">
    <original>Q</original>
    <variation>H</variation>
    <location>
        <position position="2257"/>
    </location>
</feature>
<feature type="sequence variant" description="In strain: ATCC VR-759 and Isolate clinical OC43-Paris.">
    <original>K</original>
    <variation>R</variation>
    <location>
        <position position="2386"/>
    </location>
</feature>
<feature type="sequence variant" description="In strain: ATCC VR-759, Isolate clinical OC43-Paris and Isolate 87309 Belgium 2003.">
    <original>I</original>
    <variation>T</variation>
    <location>
        <position position="2500"/>
    </location>
</feature>
<feature type="sequence variant" description="In strain: ATCC VR-759 and Isolate clinical OC43-Paris.">
    <original>D</original>
    <variation>E</variation>
    <location>
        <position position="2921"/>
    </location>
</feature>
<feature type="sequence variant" description="In strain: ATCC VR-759 and Isolate clinical OC43-Paris.">
    <original>V</original>
    <variation>I</variation>
    <location>
        <position position="2961"/>
    </location>
</feature>
<feature type="sequence variant" description="In strain: ATCC VR-759 and Isolate clinical OC43-Paris.">
    <original>T</original>
    <variation>I</variation>
    <location>
        <position position="3086"/>
    </location>
</feature>
<feature type="sequence variant" description="In strain: ATCC VR-759 and Isolate clinical OC43-Paris.">
    <original>P</original>
    <variation>L</variation>
    <location>
        <position position="3440"/>
    </location>
</feature>
<feature type="sequence variant" description="In strain: ATCC VR-759 and Isolate clinical OC43-Paris.">
    <original>L</original>
    <variation>V</variation>
    <location>
        <position position="3451"/>
    </location>
</feature>
<feature type="sequence variant" description="In strain: ATCC VR-759 and Isolate clinical OC43-Paris.">
    <original>I</original>
    <variation>V</variation>
    <location>
        <position position="3466"/>
    </location>
</feature>
<feature type="sequence variant" description="In strain: ATCC VR-759 and Isolate clinical OC43-Paris.">
    <original>I</original>
    <variation>V</variation>
    <location>
        <position position="4067"/>
    </location>
</feature>
<feature type="sequence variant" description="In strain: ATCC VR-759, Isolate clinical OC43-Paris and Isolate 87309 Belgium 2003.">
    <original>I</original>
    <variation>V</variation>
    <location>
        <position position="4071"/>
    </location>
</feature>
<feature type="sequence variant" description="In strain: ATCC VR-759 and Isolate clinical OC43-Paris.">
    <original>A</original>
    <variation>T</variation>
    <location>
        <position position="4382"/>
    </location>
</feature>
<feature type="sequence variant" description="In strain: ATCC VR-759, Isolate clinical OC43-Paris and Isolate Tulsa 1999 and Isolate 87309 Belgium 2003.">
    <original>I</original>
    <variation>L</variation>
    <location>
        <position position="4994"/>
    </location>
</feature>
<feature type="sequence variant" description="In strain: Isolate Tulsa 1999.">
    <original>SD</original>
    <variation>RT</variation>
    <location>
        <begin position="5014"/>
        <end position="5015"/>
    </location>
</feature>
<feature type="sequence variant" description="In strain: ATCC VR-759, Isolate clinical OC43-Paris and Isolate 87309 Belgium 2003.">
    <original>L</original>
    <variation>S</variation>
    <location>
        <position position="5765"/>
    </location>
</feature>
<feature type="sequence variant" description="In strain: ATCC VR-759 and Isolate clinical OC43-Paris.">
    <original>L</original>
    <variation>R</variation>
    <location>
        <position position="5997"/>
    </location>
</feature>
<feature type="sequence variant" description="In strain: ATCC VR-759 and Isolate clinical OC43-Paris.">
    <original>G</original>
    <variation>A</variation>
    <location>
        <position position="6236"/>
    </location>
</feature>
<feature type="sequence variant" description="In strain: ATCC VR-759 and Isolate clinical OC43-Paris.">
    <original>T</original>
    <variation>A</variation>
    <location>
        <position position="6454"/>
    </location>
</feature>
<feature type="sequence variant" description="In strain: ATCC VR-759, Isolate clinical OC43-Paris and Isolate 87309 Belgium 2003.">
    <original>F</original>
    <variation>L</variation>
    <location>
        <position position="6546"/>
    </location>
</feature>
<feature type="sequence variant" description="In strain: Isolate 87309 Belgium 2003.">
    <original>D</original>
    <variation>E</variation>
    <location>
        <position position="6636"/>
    </location>
</feature>
<feature type="sequence variant" description="In strain: Isolate 87309 Belgium 2003.">
    <original>A</original>
    <variation>T</variation>
    <location>
        <position position="6665"/>
    </location>
</feature>
<feature type="sequence variant" description="In strain: ATCC VR-759 and Isolate clinical OC43-Paris.">
    <original>T</original>
    <variation>A</variation>
    <location>
        <position position="6754"/>
    </location>
</feature>
<feature type="sequence conflict" description="In Ref. 3; AAT84359/AAT84351." evidence="37" ref="3">
    <original>I</original>
    <variation>M</variation>
    <location>
        <position position="426"/>
    </location>
</feature>
<feature type="sequence conflict" description="In Ref. 3; AAT84359/AAT84351." evidence="37" ref="3">
    <original>D</original>
    <variation>A</variation>
    <location>
        <position position="813"/>
    </location>
</feature>
<feature type="sequence conflict" description="In Ref. 2; AAR01012." evidence="37" ref="2">
    <original>LN</original>
    <variation>FK</variation>
    <location>
        <begin position="4376"/>
        <end position="4377"/>
    </location>
</feature>
<feature type="helix" evidence="38">
    <location>
        <begin position="6798"/>
        <end position="6801"/>
    </location>
</feature>
<feature type="strand" evidence="38">
    <location>
        <begin position="6802"/>
        <end position="6806"/>
    </location>
</feature>
<feature type="helix" evidence="38">
    <location>
        <begin position="6809"/>
        <end position="6812"/>
    </location>
</feature>
<feature type="helix" evidence="38">
    <location>
        <begin position="6838"/>
        <end position="6850"/>
    </location>
</feature>
<feature type="strand" evidence="38">
    <location>
        <begin position="6862"/>
        <end position="6867"/>
    </location>
</feature>
<feature type="helix" evidence="38">
    <location>
        <begin position="6876"/>
        <end position="6884"/>
    </location>
</feature>
<feature type="strand" evidence="38">
    <location>
        <begin position="6890"/>
        <end position="6897"/>
    </location>
</feature>
<feature type="strand" evidence="38">
    <location>
        <begin position="6902"/>
        <end position="6909"/>
    </location>
</feature>
<feature type="helix" evidence="38">
    <location>
        <begin position="6911"/>
        <end position="6913"/>
    </location>
</feature>
<feature type="strand" evidence="38">
    <location>
        <begin position="6920"/>
        <end position="6925"/>
    </location>
</feature>
<feature type="strand" evidence="38">
    <location>
        <begin position="6936"/>
        <end position="6938"/>
    </location>
</feature>
<feature type="helix" evidence="38">
    <location>
        <begin position="6945"/>
        <end position="6956"/>
    </location>
</feature>
<feature type="strand" evidence="38">
    <location>
        <begin position="6957"/>
        <end position="6967"/>
    </location>
</feature>
<feature type="strand" evidence="38">
    <location>
        <begin position="6969"/>
        <end position="6971"/>
    </location>
</feature>
<feature type="helix" evidence="38">
    <location>
        <begin position="6974"/>
        <end position="6979"/>
    </location>
</feature>
<feature type="helix" evidence="38">
    <location>
        <begin position="6980"/>
        <end position="6982"/>
    </location>
</feature>
<feature type="strand" evidence="38">
    <location>
        <begin position="6983"/>
        <end position="6992"/>
    </location>
</feature>
<feature type="turn" evidence="38">
    <location>
        <begin position="6993"/>
        <end position="6996"/>
    </location>
</feature>
<feature type="strand" evidence="38">
    <location>
        <begin position="7000"/>
        <end position="7007"/>
    </location>
</feature>
<feature type="helix" evidence="38">
    <location>
        <begin position="7017"/>
        <end position="7029"/>
    </location>
</feature>
<feature type="helix" evidence="38">
    <location>
        <begin position="7038"/>
        <end position="7041"/>
    </location>
</feature>
<feature type="strand" evidence="38">
    <location>
        <begin position="7054"/>
        <end position="7056"/>
    </location>
</feature>
<feature type="helix" evidence="38">
    <location>
        <begin position="7060"/>
        <end position="7062"/>
    </location>
</feature>
<feature type="helix" evidence="38">
    <location>
        <begin position="7065"/>
        <end position="7071"/>
    </location>
</feature>
<feature type="turn" evidence="38">
    <location>
        <begin position="7072"/>
        <end position="7074"/>
    </location>
</feature>
<feature type="strand" evidence="38">
    <location>
        <begin position="7076"/>
        <end position="7079"/>
    </location>
</feature>